<evidence type="ECO:0000255" key="1">
    <source>
        <dbReference type="PROSITE-ProRule" id="PRU00809"/>
    </source>
</evidence>
<evidence type="ECO:0000269" key="2">
    <source>
    </source>
</evidence>
<evidence type="ECO:0000269" key="3">
    <source>
    </source>
</evidence>
<evidence type="ECO:0000269" key="4">
    <source>
    </source>
</evidence>
<evidence type="ECO:0000305" key="5"/>
<evidence type="ECO:0007744" key="6">
    <source>
    </source>
</evidence>
<evidence type="ECO:0007829" key="7">
    <source>
        <dbReference type="PDB" id="1JD2"/>
    </source>
</evidence>
<evidence type="ECO:0007829" key="8">
    <source>
        <dbReference type="PDB" id="1RYP"/>
    </source>
</evidence>
<evidence type="ECO:0007829" key="9">
    <source>
        <dbReference type="PDB" id="3SDK"/>
    </source>
</evidence>
<evidence type="ECO:0007829" key="10">
    <source>
        <dbReference type="PDB" id="5FGI"/>
    </source>
</evidence>
<accession>P38624</accession>
<accession>D6VWH4</accession>
<proteinExistence type="evidence at protein level"/>
<organism>
    <name type="scientific">Saccharomyces cerevisiae (strain ATCC 204508 / S288c)</name>
    <name type="common">Baker's yeast</name>
    <dbReference type="NCBI Taxonomy" id="559292"/>
    <lineage>
        <taxon>Eukaryota</taxon>
        <taxon>Fungi</taxon>
        <taxon>Dikarya</taxon>
        <taxon>Ascomycota</taxon>
        <taxon>Saccharomycotina</taxon>
        <taxon>Saccharomycetes</taxon>
        <taxon>Saccharomycetales</taxon>
        <taxon>Saccharomycetaceae</taxon>
        <taxon>Saccharomyces</taxon>
    </lineage>
</organism>
<feature type="propeptide" id="PRO_0000026643" description="Removed in mature form">
    <location>
        <begin position="1"/>
        <end position="19"/>
    </location>
</feature>
<feature type="chain" id="PRO_0000026644" description="Proteasome subunit beta type-1">
    <location>
        <begin position="20"/>
        <end position="215"/>
    </location>
</feature>
<feature type="active site" description="Nucleophile" evidence="4">
    <location>
        <position position="20"/>
    </location>
</feature>
<feature type="modified residue" description="N-acetylmethionine" evidence="6">
    <location>
        <position position="1"/>
    </location>
</feature>
<feature type="helix" evidence="10">
    <location>
        <begin position="6"/>
        <end position="9"/>
    </location>
</feature>
<feature type="strand" evidence="8">
    <location>
        <begin position="22"/>
        <end position="27"/>
    </location>
</feature>
<feature type="strand" evidence="8">
    <location>
        <begin position="30"/>
        <end position="35"/>
    </location>
</feature>
<feature type="strand" evidence="8">
    <location>
        <begin position="39"/>
        <end position="41"/>
    </location>
</feature>
<feature type="strand" evidence="8">
    <location>
        <begin position="44"/>
        <end position="49"/>
    </location>
</feature>
<feature type="strand" evidence="8">
    <location>
        <begin position="53"/>
        <end position="57"/>
    </location>
</feature>
<feature type="strand" evidence="8">
    <location>
        <begin position="60"/>
        <end position="67"/>
    </location>
</feature>
<feature type="helix" evidence="8">
    <location>
        <begin position="68"/>
        <end position="89"/>
    </location>
</feature>
<feature type="helix" evidence="8">
    <location>
        <begin position="94"/>
        <end position="107"/>
    </location>
</feature>
<feature type="turn" evidence="8">
    <location>
        <begin position="108"/>
        <end position="111"/>
    </location>
</feature>
<feature type="strand" evidence="8">
    <location>
        <begin position="114"/>
        <end position="122"/>
    </location>
</feature>
<feature type="turn" evidence="8">
    <location>
        <begin position="123"/>
        <end position="125"/>
    </location>
</feature>
<feature type="strand" evidence="8">
    <location>
        <begin position="126"/>
        <end position="132"/>
    </location>
</feature>
<feature type="turn" evidence="7">
    <location>
        <begin position="134"/>
        <end position="136"/>
    </location>
</feature>
<feature type="strand" evidence="8">
    <location>
        <begin position="139"/>
        <end position="147"/>
    </location>
</feature>
<feature type="helix" evidence="8">
    <location>
        <begin position="148"/>
        <end position="153"/>
    </location>
</feature>
<feature type="helix" evidence="8">
    <location>
        <begin position="154"/>
        <end position="160"/>
    </location>
</feature>
<feature type="helix" evidence="8">
    <location>
        <begin position="167"/>
        <end position="184"/>
    </location>
</feature>
<feature type="strand" evidence="9">
    <location>
        <begin position="185"/>
        <end position="187"/>
    </location>
</feature>
<feature type="strand" evidence="8">
    <location>
        <begin position="192"/>
        <end position="198"/>
    </location>
</feature>
<feature type="strand" evidence="8">
    <location>
        <begin position="201"/>
        <end position="207"/>
    </location>
</feature>
<feature type="helix" evidence="8">
    <location>
        <begin position="209"/>
        <end position="212"/>
    </location>
</feature>
<sequence length="215" mass="23548">MNGIQVDINRLKKGEVSLGTSIMAVTFKDGVILGADSRTTTGAYIANRVTDKLTRVHDKIWCCRSGSAADTQAIADIVQYHLELYTSQYGTPSTETAASVFKELCYENKDNLTAGIIVAGYDDKNKGEVYTIPLGGSVHKLPYAIAGSGSTFIYGYCDKNFRENMSKEETVDFIKHSLSQAIKWDGSSGGVIRMVVLTAAGVERLIFYPDEYEQL</sequence>
<reference key="1">
    <citation type="journal article" date="1994" name="FEBS Lett.">
        <title>PRE3, highly homologous to the human major histocompatibility complex-linked LMP2 (RING12) gene, codes for a yeast proteasome subunit necessary for the peptidylglutamyl-peptide hydrolyzing activity.</title>
        <authorList>
            <person name="Enenkel C."/>
            <person name="Lehmann H."/>
            <person name="Kipper J."/>
            <person name="Gueckel R."/>
            <person name="Hilt W."/>
            <person name="Wolf D.H."/>
        </authorList>
    </citation>
    <scope>NUCLEOTIDE SEQUENCE [GENOMIC DNA]</scope>
    <source>
        <strain>ATCC 204508 / S288c</strain>
    </source>
</reference>
<reference key="2">
    <citation type="journal article" date="1995" name="EMBO J.">
        <title>Biogenesis, structure and function of the yeast 20S proteasome.</title>
        <authorList>
            <person name="Chen P."/>
            <person name="Hochstrasser M."/>
        </authorList>
    </citation>
    <scope>SEQUENCE REVISION TO N-TERMINUS</scope>
</reference>
<reference key="3">
    <citation type="journal article" date="1996" name="EMBO J.">
        <title>Complete nucleotide sequence of Saccharomyces cerevisiae chromosome X.</title>
        <authorList>
            <person name="Galibert F."/>
            <person name="Alexandraki D."/>
            <person name="Baur A."/>
            <person name="Boles E."/>
            <person name="Chalwatzis N."/>
            <person name="Chuat J.-C."/>
            <person name="Coster F."/>
            <person name="Cziepluch C."/>
            <person name="de Haan M."/>
            <person name="Domdey H."/>
            <person name="Durand P."/>
            <person name="Entian K.-D."/>
            <person name="Gatius M."/>
            <person name="Goffeau A."/>
            <person name="Grivell L.A."/>
            <person name="Hennemann A."/>
            <person name="Herbert C.J."/>
            <person name="Heumann K."/>
            <person name="Hilger F."/>
            <person name="Hollenberg C.P."/>
            <person name="Huang M.-E."/>
            <person name="Jacq C."/>
            <person name="Jauniaux J.-C."/>
            <person name="Katsoulou C."/>
            <person name="Kirchrath L."/>
            <person name="Kleine K."/>
            <person name="Kordes E."/>
            <person name="Koetter P."/>
            <person name="Liebl S."/>
            <person name="Louis E.J."/>
            <person name="Manus V."/>
            <person name="Mewes H.-W."/>
            <person name="Miosga T."/>
            <person name="Obermaier B."/>
            <person name="Perea J."/>
            <person name="Pohl T.M."/>
            <person name="Portetelle D."/>
            <person name="Pujol A."/>
            <person name="Purnelle B."/>
            <person name="Ramezani Rad M."/>
            <person name="Rasmussen S.W."/>
            <person name="Rose M."/>
            <person name="Rossau R."/>
            <person name="Schaaff-Gerstenschlaeger I."/>
            <person name="Smits P.H.M."/>
            <person name="Scarcez T."/>
            <person name="Soriano N."/>
            <person name="To Van D."/>
            <person name="Tzermia M."/>
            <person name="Van Broekhoven A."/>
            <person name="Vandenbol M."/>
            <person name="Wedler H."/>
            <person name="von Wettstein D."/>
            <person name="Wambutt R."/>
            <person name="Zagulski M."/>
            <person name="Zollner A."/>
            <person name="Karpfinger-Hartl L."/>
        </authorList>
    </citation>
    <scope>NUCLEOTIDE SEQUENCE [LARGE SCALE GENOMIC DNA]</scope>
    <source>
        <strain>ATCC 204508 / S288c</strain>
    </source>
</reference>
<reference key="4">
    <citation type="journal article" date="2014" name="G3 (Bethesda)">
        <title>The reference genome sequence of Saccharomyces cerevisiae: Then and now.</title>
        <authorList>
            <person name="Engel S.R."/>
            <person name="Dietrich F.S."/>
            <person name="Fisk D.G."/>
            <person name="Binkley G."/>
            <person name="Balakrishnan R."/>
            <person name="Costanzo M.C."/>
            <person name="Dwight S.S."/>
            <person name="Hitz B.C."/>
            <person name="Karra K."/>
            <person name="Nash R.S."/>
            <person name="Weng S."/>
            <person name="Wong E.D."/>
            <person name="Lloyd P."/>
            <person name="Skrzypek M.S."/>
            <person name="Miyasato S.R."/>
            <person name="Simison M."/>
            <person name="Cherry J.M."/>
        </authorList>
    </citation>
    <scope>GENOME REANNOTATION</scope>
    <source>
        <strain>ATCC 204508 / S288c</strain>
    </source>
</reference>
<reference key="5">
    <citation type="journal article" date="2003" name="Nature">
        <title>Global analysis of protein expression in yeast.</title>
        <authorList>
            <person name="Ghaemmaghami S."/>
            <person name="Huh W.-K."/>
            <person name="Bower K."/>
            <person name="Howson R.W."/>
            <person name="Belle A."/>
            <person name="Dephoure N."/>
            <person name="O'Shea E.K."/>
            <person name="Weissman J.S."/>
        </authorList>
    </citation>
    <scope>LEVEL OF PROTEIN EXPRESSION [LARGE SCALE ANALYSIS]</scope>
</reference>
<reference key="6">
    <citation type="journal article" date="2008" name="Mol. Cell. Proteomics">
        <title>A multidimensional chromatography technology for in-depth phosphoproteome analysis.</title>
        <authorList>
            <person name="Albuquerque C.P."/>
            <person name="Smolka M.B."/>
            <person name="Payne S.H."/>
            <person name="Bafna V."/>
            <person name="Eng J."/>
            <person name="Zhou H."/>
        </authorList>
    </citation>
    <scope>IDENTIFICATION BY MASS SPECTROMETRY [LARGE SCALE ANALYSIS]</scope>
</reference>
<reference key="7">
    <citation type="journal article" date="2012" name="Proc. Natl. Acad. Sci. U.S.A.">
        <title>N-terminal acetylome analyses and functional insights of the N-terminal acetyltransferase NatB.</title>
        <authorList>
            <person name="Van Damme P."/>
            <person name="Lasa M."/>
            <person name="Polevoda B."/>
            <person name="Gazquez C."/>
            <person name="Elosegui-Artola A."/>
            <person name="Kim D.S."/>
            <person name="De Juan-Pardo E."/>
            <person name="Demeyer K."/>
            <person name="Hole K."/>
            <person name="Larrea E."/>
            <person name="Timmerman E."/>
            <person name="Prieto J."/>
            <person name="Arnesen T."/>
            <person name="Sherman F."/>
            <person name="Gevaert K."/>
            <person name="Aldabe R."/>
        </authorList>
    </citation>
    <scope>ACETYLATION [LARGE SCALE ANALYSIS] AT MET-1</scope>
    <scope>IDENTIFICATION BY MASS SPECTROMETRY [LARGE SCALE ANALYSIS]</scope>
</reference>
<reference key="8">
    <citation type="journal article" date="1997" name="Nature">
        <title>Structure of 20S proteasome from yeast at 2.4-A resolution.</title>
        <authorList>
            <person name="Groll M."/>
            <person name="Ditzel L."/>
            <person name="Loewe J."/>
            <person name="Stock D."/>
            <person name="Bochtler M."/>
            <person name="Bartunik H.D."/>
            <person name="Huber R."/>
        </authorList>
    </citation>
    <scope>X-RAY CRYSTALLOGRAPHY (1.9 ANGSTROMS) OF 11-215 OF COMPLEX WITH THE 20S PROTEASOME</scope>
    <scope>PROTEOLYTIC PROCESSING</scope>
    <scope>ACTIVE SITE</scope>
</reference>
<reference key="9">
    <citation type="journal article" date="2000" name="Nature">
        <title>Structural basis for the activation of 20S proteasomes by 11S regulators.</title>
        <authorList>
            <person name="Whitby F.G."/>
            <person name="Masters E.I."/>
            <person name="Kramer L."/>
            <person name="Knowlton J.R."/>
            <person name="Yao Y."/>
            <person name="Wang C.C."/>
            <person name="Hill C.P."/>
        </authorList>
    </citation>
    <scope>X-RAY CRYSTALLOGRAPHY (3.2 ANGSTROMS) OF 20-215 OF COMPLEX WITH THE 20S PROTEASOME AND A 11S REGULATORY COMPLEX</scope>
</reference>
<reference key="10">
    <citation type="journal article" date="2000" name="Nat. Struct. Biol.">
        <title>A gated channel into the proteasome core particle.</title>
        <authorList>
            <person name="Groll M."/>
            <person name="Bajorek M."/>
            <person name="Koehler A."/>
            <person name="Moroder L."/>
            <person name="Rubin D.M."/>
            <person name="Huber R."/>
            <person name="Glickman M.H."/>
            <person name="Finley D."/>
        </authorList>
    </citation>
    <scope>X-RAY CRYSTALLOGRAPHY (2.4 ANGSTROMS) OF 20-215 OF COMPLEX WITH THE 20S PROTEASOME</scope>
</reference>
<reference key="11">
    <citation type="journal article" date="2006" name="Chem. Biol.">
        <title>TMC-95-based inhibitor design provides evidence for the catalytic versatility of the proteasome.</title>
        <authorList>
            <person name="Groll M."/>
            <person name="Goetz M."/>
            <person name="Kaiser M."/>
            <person name="Weyher E."/>
            <person name="Moroder L."/>
        </authorList>
    </citation>
    <scope>X-RAY CRYSTALLOGRAPHY (2.81 ANGSTROMS) OF 20-215 OF COMPLEX WITH THE 20S PROTEASOME AND A TMC-95-BASED INHIBITOR</scope>
</reference>
<reference key="12">
    <citation type="journal article" date="2006" name="J. Am. Chem. Soc.">
        <title>Crystal structures of salinosporamide A (NPI-0052) and B (NPI-0047) in complex with the 20S proteasome reveal important consequences of beta-lactone ring opening and a mechanism for irreversible binding.</title>
        <authorList>
            <person name="Groll M."/>
            <person name="Huber R."/>
            <person name="Potts B.C.M."/>
        </authorList>
    </citation>
    <scope>X-RAY CRYSTALLOGRAPHY (2.8 ANGSTROMS) OF 20-215 OF COMPLEX WITH THE 20S PROTEASOME AND SALINOSPORAMIDE</scope>
</reference>
<reference key="13">
    <citation type="journal article" date="2006" name="Structure">
        <title>Crystal structure of the boronic acid-based proteasome inhibitor bortezomib in complex with the yeast 20S proteasome.</title>
        <authorList>
            <person name="Groll M."/>
            <person name="Berkers C.R."/>
            <person name="Ploegh H.L."/>
            <person name="Ovaa H."/>
        </authorList>
    </citation>
    <scope>X-RAY CRYSTALLOGRAPHY (2.8 ANGSTROMS) OF 20-215 OF COMPLEX WITH THE 20S PROTEASOME AND BORTEZOMIB</scope>
</reference>
<reference key="14">
    <citation type="journal article" date="2010" name="Mol. Cell">
        <title>Structure of a Blm10 complex reveals common mechanisms for proteasome binding and gate opening.</title>
        <authorList>
            <person name="Sadre-Bazzaz K."/>
            <person name="Whitby F.G."/>
            <person name="Robinson H."/>
            <person name="Formosa T."/>
            <person name="Hill C.P."/>
        </authorList>
    </citation>
    <scope>X-RAY CRYSTALLOGRAPHY (3.0 ANGSTROMS) OF 21-215 IN COMPLEX WITH THE PROTEASOME</scope>
</reference>
<reference key="15">
    <citation type="journal article" date="2012" name="Proc. Natl. Acad. Sci. U.S.A.">
        <title>Near-atomic resolution structural model of the yeast 26S proteasome.</title>
        <authorList>
            <person name="Beck F."/>
            <person name="Unverdorben P."/>
            <person name="Bohn S."/>
            <person name="Schweitzer A."/>
            <person name="Pfeifer G."/>
            <person name="Sakata E."/>
            <person name="Nickell S."/>
            <person name="Plitzko J.M."/>
            <person name="Villa E."/>
            <person name="Baumeister W."/>
            <person name="Forster F."/>
        </authorList>
    </citation>
    <scope>STRUCTURE BY ELECTRON MICROSCOPY (7.4 ANGSTROMS) OF THE 26S PROTEASOME</scope>
</reference>
<name>PSB1_YEAST</name>
<comment type="function">
    <text>The proteasome degrades poly-ubiquitinated proteins in the cytoplasm and in the nucleus. It is essential for the regulated turnover of proteins and for the removal of misfolded proteins. The proteasome is a multicatalytic proteinase complex that is characterized by its ability to cleave peptides with Arg, Phe, Tyr, Leu, and Glu adjacent to the leaving group at neutral or slightly basic pH. It has an ATP-dependent proteolytic activity. PRE3 and PRE4 are necessary for the peptidyl-glutamyl-peptide-hydrolyzing activity.</text>
</comment>
<comment type="function">
    <text>This subunit is necessary for the peptidylglutamyl-peptide hydrolyzing activity.</text>
</comment>
<comment type="catalytic activity">
    <reaction>
        <text>Cleavage of peptide bonds with very broad specificity.</text>
        <dbReference type="EC" id="3.4.25.1"/>
    </reaction>
</comment>
<comment type="subunit">
    <text evidence="3">The 26S proteasome consists of a 20S proteasome core and two 19S regulatory subunits. The 20S proteasome core is composed of 28 subunits that are arranged in four stacked rings, resulting in a barrel-shaped structure. The two end rings are each formed by seven alpha subunits, and the two central rings are each formed by seven beta subunits. The catalytic chamber with the active sites is on the inside of the barrel.</text>
</comment>
<comment type="interaction">
    <interactant intactId="EBI-14005">
        <id>P38624</id>
    </interactant>
    <interactant intactId="EBI-14001">
        <id>P30656</id>
        <label>PRE2</label>
    </interactant>
    <organismsDiffer>false</organismsDiffer>
    <experiments>3</experiments>
</comment>
<comment type="subcellular location">
    <subcellularLocation>
        <location>Cytoplasm</location>
    </subcellularLocation>
    <subcellularLocation>
        <location>Nucleus</location>
    </subcellularLocation>
</comment>
<comment type="miscellaneous">
    <text>The side chain of Thr-20 acts as a nucleophile, and the N-terminal amino group acts as a proton acceptor.</text>
</comment>
<comment type="miscellaneous">
    <text evidence="2">Present with 7250 molecules/cell in log phase SD medium.</text>
</comment>
<comment type="similarity">
    <text evidence="1">Belongs to the peptidase T1B family.</text>
</comment>
<comment type="sequence caution" evidence="5">
    <conflict type="erroneous initiation">
        <sequence resource="EMBL-CDS" id="CAA55591"/>
    </conflict>
</comment>
<comment type="sequence caution" evidence="5">
    <conflict type="erroneous initiation">
        <sequence resource="EMBL-CDS" id="CAA60921"/>
    </conflict>
</comment>
<keyword id="KW-0002">3D-structure</keyword>
<keyword id="KW-0007">Acetylation</keyword>
<keyword id="KW-0963">Cytoplasm</keyword>
<keyword id="KW-0378">Hydrolase</keyword>
<keyword id="KW-0539">Nucleus</keyword>
<keyword id="KW-0645">Protease</keyword>
<keyword id="KW-0647">Proteasome</keyword>
<keyword id="KW-1185">Reference proteome</keyword>
<keyword id="KW-0888">Threonine protease</keyword>
<keyword id="KW-0865">Zymogen</keyword>
<gene>
    <name type="primary">PRE3</name>
    <name type="ordered locus">YJL001W</name>
    <name type="ORF">J1407</name>
</gene>
<dbReference type="EC" id="3.4.25.1"/>
<dbReference type="EMBL" id="X78991">
    <property type="protein sequence ID" value="CAA55591.1"/>
    <property type="status" value="ALT_INIT"/>
    <property type="molecule type" value="Genomic_DNA"/>
</dbReference>
<dbReference type="EMBL" id="Z49276">
    <property type="protein sequence ID" value="CAA89290.1"/>
    <property type="molecule type" value="Genomic_DNA"/>
</dbReference>
<dbReference type="EMBL" id="Z49277">
    <property type="protein sequence ID" value="CAA89292.1"/>
    <property type="molecule type" value="Genomic_DNA"/>
</dbReference>
<dbReference type="EMBL" id="X87611">
    <property type="protein sequence ID" value="CAA60921.1"/>
    <property type="status" value="ALT_INIT"/>
    <property type="molecule type" value="Genomic_DNA"/>
</dbReference>
<dbReference type="EMBL" id="X86020">
    <property type="protein sequence ID" value="CAA60015.1"/>
    <property type="molecule type" value="mRNA"/>
</dbReference>
<dbReference type="EMBL" id="S78566">
    <property type="protein sequence ID" value="AAB34629.1"/>
    <property type="molecule type" value="mRNA"/>
</dbReference>
<dbReference type="EMBL" id="BK006943">
    <property type="protein sequence ID" value="DAA08790.1"/>
    <property type="molecule type" value="Genomic_DNA"/>
</dbReference>
<dbReference type="PIR" id="S61337">
    <property type="entry name" value="S61337"/>
</dbReference>
<dbReference type="RefSeq" id="NP_012533.1">
    <property type="nucleotide sequence ID" value="NM_001181435.1"/>
</dbReference>
<dbReference type="PDB" id="1FNT">
    <property type="method" value="X-ray"/>
    <property type="resolution" value="3.20 A"/>
    <property type="chains" value="H/V=20-215"/>
</dbReference>
<dbReference type="PDB" id="1G0U">
    <property type="method" value="X-ray"/>
    <property type="resolution" value="2.40 A"/>
    <property type="chains" value="2/N=20-215"/>
</dbReference>
<dbReference type="PDB" id="1G65">
    <property type="method" value="X-ray"/>
    <property type="resolution" value="2.25 A"/>
    <property type="chains" value="2/N=20-215"/>
</dbReference>
<dbReference type="PDB" id="1JD2">
    <property type="method" value="X-ray"/>
    <property type="resolution" value="3.00 A"/>
    <property type="chains" value="N/U=20-215"/>
</dbReference>
<dbReference type="PDB" id="1RYP">
    <property type="method" value="X-ray"/>
    <property type="resolution" value="1.90 A"/>
    <property type="chains" value="H/V=11-215"/>
</dbReference>
<dbReference type="PDB" id="1Z7Q">
    <property type="method" value="X-ray"/>
    <property type="resolution" value="3.22 A"/>
    <property type="chains" value="H/V=20-215"/>
</dbReference>
<dbReference type="PDB" id="2F16">
    <property type="method" value="X-ray"/>
    <property type="resolution" value="2.80 A"/>
    <property type="chains" value="2/N=20-215"/>
</dbReference>
<dbReference type="PDB" id="2FAK">
    <property type="method" value="X-ray"/>
    <property type="resolution" value="2.80 A"/>
    <property type="chains" value="2/N=20-215"/>
</dbReference>
<dbReference type="PDB" id="2GPL">
    <property type="method" value="X-ray"/>
    <property type="resolution" value="2.81 A"/>
    <property type="chains" value="2/N=20-215"/>
</dbReference>
<dbReference type="PDB" id="2ZCY">
    <property type="method" value="X-ray"/>
    <property type="resolution" value="2.90 A"/>
    <property type="chains" value="1/N=20-215"/>
</dbReference>
<dbReference type="PDB" id="3BDM">
    <property type="method" value="X-ray"/>
    <property type="resolution" value="2.70 A"/>
    <property type="chains" value="1/N=20-215"/>
</dbReference>
<dbReference type="PDB" id="3D29">
    <property type="method" value="X-ray"/>
    <property type="resolution" value="2.60 A"/>
    <property type="chains" value="2/N=20-215"/>
</dbReference>
<dbReference type="PDB" id="3DY3">
    <property type="method" value="X-ray"/>
    <property type="resolution" value="2.81 A"/>
    <property type="chains" value="2/N=20-215"/>
</dbReference>
<dbReference type="PDB" id="3DY4">
    <property type="method" value="X-ray"/>
    <property type="resolution" value="2.80 A"/>
    <property type="chains" value="2/N=20-215"/>
</dbReference>
<dbReference type="PDB" id="3E47">
    <property type="method" value="X-ray"/>
    <property type="resolution" value="3.00 A"/>
    <property type="chains" value="2/N=20-215"/>
</dbReference>
<dbReference type="PDB" id="3GPJ">
    <property type="method" value="X-ray"/>
    <property type="resolution" value="2.70 A"/>
    <property type="chains" value="2/N=20-215"/>
</dbReference>
<dbReference type="PDB" id="3GPT">
    <property type="method" value="X-ray"/>
    <property type="resolution" value="2.41 A"/>
    <property type="chains" value="2/N=20-215"/>
</dbReference>
<dbReference type="PDB" id="3GPW">
    <property type="method" value="X-ray"/>
    <property type="resolution" value="2.50 A"/>
    <property type="chains" value="2/N=20-215"/>
</dbReference>
<dbReference type="PDB" id="3HYE">
    <property type="method" value="X-ray"/>
    <property type="resolution" value="2.50 A"/>
    <property type="chains" value="2/N=20-215"/>
</dbReference>
<dbReference type="PDB" id="3JCO">
    <property type="method" value="EM"/>
    <property type="resolution" value="4.80 A"/>
    <property type="chains" value="3/h=1-215"/>
</dbReference>
<dbReference type="PDB" id="3JCP">
    <property type="method" value="EM"/>
    <property type="resolution" value="4.60 A"/>
    <property type="chains" value="3/h=1-215"/>
</dbReference>
<dbReference type="PDB" id="3MG0">
    <property type="method" value="X-ray"/>
    <property type="resolution" value="2.68 A"/>
    <property type="chains" value="2/N=20-215"/>
</dbReference>
<dbReference type="PDB" id="3MG4">
    <property type="method" value="X-ray"/>
    <property type="resolution" value="3.11 A"/>
    <property type="chains" value="2/N=20-215"/>
</dbReference>
<dbReference type="PDB" id="3MG6">
    <property type="method" value="X-ray"/>
    <property type="resolution" value="2.60 A"/>
    <property type="chains" value="2/N=20-215"/>
</dbReference>
<dbReference type="PDB" id="3MG7">
    <property type="method" value="X-ray"/>
    <property type="resolution" value="2.78 A"/>
    <property type="chains" value="2/N=20-215"/>
</dbReference>
<dbReference type="PDB" id="3MG8">
    <property type="method" value="X-ray"/>
    <property type="resolution" value="2.59 A"/>
    <property type="chains" value="2/N=20-215"/>
</dbReference>
<dbReference type="PDB" id="3NZJ">
    <property type="method" value="X-ray"/>
    <property type="resolution" value="2.40 A"/>
    <property type="chains" value="2/N=1-215"/>
</dbReference>
<dbReference type="PDB" id="3NZW">
    <property type="method" value="X-ray"/>
    <property type="resolution" value="2.50 A"/>
    <property type="chains" value="2/N=1-215"/>
</dbReference>
<dbReference type="PDB" id="3NZX">
    <property type="method" value="X-ray"/>
    <property type="resolution" value="2.70 A"/>
    <property type="chains" value="2/N=1-215"/>
</dbReference>
<dbReference type="PDB" id="3OEU">
    <property type="method" value="X-ray"/>
    <property type="resolution" value="2.60 A"/>
    <property type="chains" value="2/N=20-215"/>
</dbReference>
<dbReference type="PDB" id="3OEV">
    <property type="method" value="X-ray"/>
    <property type="resolution" value="2.85 A"/>
    <property type="chains" value="2/N=20-215"/>
</dbReference>
<dbReference type="PDB" id="3OKJ">
    <property type="method" value="X-ray"/>
    <property type="resolution" value="2.70 A"/>
    <property type="chains" value="2/N=20-215"/>
</dbReference>
<dbReference type="PDB" id="3SDI">
    <property type="method" value="X-ray"/>
    <property type="resolution" value="2.65 A"/>
    <property type="chains" value="2/N=20-215"/>
</dbReference>
<dbReference type="PDB" id="3SDK">
    <property type="method" value="X-ray"/>
    <property type="resolution" value="2.70 A"/>
    <property type="chains" value="2/N=20-215"/>
</dbReference>
<dbReference type="PDB" id="3SHJ">
    <property type="method" value="X-ray"/>
    <property type="resolution" value="2.80 A"/>
    <property type="chains" value="2/N=20-215"/>
</dbReference>
<dbReference type="PDB" id="3TDD">
    <property type="method" value="X-ray"/>
    <property type="resolution" value="2.70 A"/>
    <property type="chains" value="2/N=20-215"/>
</dbReference>
<dbReference type="PDB" id="3UN4">
    <property type="method" value="X-ray"/>
    <property type="resolution" value="3.40 A"/>
    <property type="chains" value="N/b=20-215"/>
</dbReference>
<dbReference type="PDB" id="3UN8">
    <property type="method" value="X-ray"/>
    <property type="resolution" value="2.70 A"/>
    <property type="chains" value="N/b=20-215"/>
</dbReference>
<dbReference type="PDB" id="3WXR">
    <property type="method" value="X-ray"/>
    <property type="resolution" value="3.15 A"/>
    <property type="chains" value="H/V=1-215"/>
</dbReference>
<dbReference type="PDB" id="4CR2">
    <property type="method" value="EM"/>
    <property type="resolution" value="7.70 A"/>
    <property type="chains" value="1=1-215"/>
</dbReference>
<dbReference type="PDB" id="4CR3">
    <property type="method" value="EM"/>
    <property type="resolution" value="9.30 A"/>
    <property type="chains" value="1=1-215"/>
</dbReference>
<dbReference type="PDB" id="4CR4">
    <property type="method" value="EM"/>
    <property type="resolution" value="8.80 A"/>
    <property type="chains" value="1=1-215"/>
</dbReference>
<dbReference type="PDB" id="4EU2">
    <property type="method" value="X-ray"/>
    <property type="resolution" value="2.51 A"/>
    <property type="chains" value="H/V=20-215"/>
</dbReference>
<dbReference type="PDB" id="4FZC">
    <property type="method" value="X-ray"/>
    <property type="resolution" value="2.80 A"/>
    <property type="chains" value="N/b=20-215"/>
</dbReference>
<dbReference type="PDB" id="4FZG">
    <property type="method" value="X-ray"/>
    <property type="resolution" value="3.00 A"/>
    <property type="chains" value="N/b=20-215"/>
</dbReference>
<dbReference type="PDB" id="4G4S">
    <property type="method" value="X-ray"/>
    <property type="resolution" value="2.49 A"/>
    <property type="chains" value="H=20-215"/>
</dbReference>
<dbReference type="PDB" id="4GK7">
    <property type="method" value="X-ray"/>
    <property type="resolution" value="2.80 A"/>
    <property type="chains" value="N/b=20-215"/>
</dbReference>
<dbReference type="PDB" id="4HNP">
    <property type="method" value="X-ray"/>
    <property type="resolution" value="2.80 A"/>
    <property type="chains" value="N/b=20-215"/>
</dbReference>
<dbReference type="PDB" id="4HRC">
    <property type="method" value="X-ray"/>
    <property type="resolution" value="2.80 A"/>
    <property type="chains" value="N/b=20-215"/>
</dbReference>
<dbReference type="PDB" id="4HRD">
    <property type="method" value="X-ray"/>
    <property type="resolution" value="2.80 A"/>
    <property type="chains" value="N/b=20-215"/>
</dbReference>
<dbReference type="PDB" id="4INR">
    <property type="method" value="X-ray"/>
    <property type="resolution" value="2.70 A"/>
    <property type="chains" value="N/b=20-215"/>
</dbReference>
<dbReference type="PDB" id="4INT">
    <property type="method" value="X-ray"/>
    <property type="resolution" value="2.90 A"/>
    <property type="chains" value="N/b=20-215"/>
</dbReference>
<dbReference type="PDB" id="4INU">
    <property type="method" value="X-ray"/>
    <property type="resolution" value="3.10 A"/>
    <property type="chains" value="N/b=20-215"/>
</dbReference>
<dbReference type="PDB" id="4J70">
    <property type="method" value="X-ray"/>
    <property type="resolution" value="2.80 A"/>
    <property type="chains" value="N/b=20-215"/>
</dbReference>
<dbReference type="PDB" id="4JSQ">
    <property type="method" value="X-ray"/>
    <property type="resolution" value="2.80 A"/>
    <property type="chains" value="N/b=20-215"/>
</dbReference>
<dbReference type="PDB" id="4JSU">
    <property type="method" value="X-ray"/>
    <property type="resolution" value="2.90 A"/>
    <property type="chains" value="N/b=20-215"/>
</dbReference>
<dbReference type="PDB" id="4JT0">
    <property type="method" value="X-ray"/>
    <property type="resolution" value="3.10 A"/>
    <property type="chains" value="N/b=20-215"/>
</dbReference>
<dbReference type="PDB" id="4LQI">
    <property type="method" value="X-ray"/>
    <property type="resolution" value="2.70 A"/>
    <property type="chains" value="N/b=20-215"/>
</dbReference>
<dbReference type="PDB" id="4LTC">
    <property type="method" value="X-ray"/>
    <property type="resolution" value="2.50 A"/>
    <property type="chains" value="N/b=20-215"/>
</dbReference>
<dbReference type="PDB" id="4NNN">
    <property type="method" value="X-ray"/>
    <property type="resolution" value="2.50 A"/>
    <property type="chains" value="N/b=20-215"/>
</dbReference>
<dbReference type="PDB" id="4NNW">
    <property type="method" value="X-ray"/>
    <property type="resolution" value="2.60 A"/>
    <property type="chains" value="N/b=20-215"/>
</dbReference>
<dbReference type="PDB" id="4NO1">
    <property type="method" value="X-ray"/>
    <property type="resolution" value="2.50 A"/>
    <property type="chains" value="N/b=20-215"/>
</dbReference>
<dbReference type="PDB" id="4NO6">
    <property type="method" value="X-ray"/>
    <property type="resolution" value="3.00 A"/>
    <property type="chains" value="N/b=20-215"/>
</dbReference>
<dbReference type="PDB" id="4NO8">
    <property type="method" value="X-ray"/>
    <property type="resolution" value="2.70 A"/>
    <property type="chains" value="N/b=20-215"/>
</dbReference>
<dbReference type="PDB" id="4NO9">
    <property type="method" value="X-ray"/>
    <property type="resolution" value="2.90 A"/>
    <property type="chains" value="N/b=20-215"/>
</dbReference>
<dbReference type="PDB" id="4Q1S">
    <property type="method" value="X-ray"/>
    <property type="resolution" value="2.60 A"/>
    <property type="chains" value="N/b=20-215"/>
</dbReference>
<dbReference type="PDB" id="4QBY">
    <property type="method" value="X-ray"/>
    <property type="resolution" value="3.00 A"/>
    <property type="chains" value="N/b=20-215"/>
</dbReference>
<dbReference type="PDB" id="4QLQ">
    <property type="method" value="X-ray"/>
    <property type="resolution" value="2.40 A"/>
    <property type="chains" value="N/b=20-215"/>
</dbReference>
<dbReference type="PDB" id="4QLS">
    <property type="method" value="X-ray"/>
    <property type="resolution" value="2.80 A"/>
    <property type="chains" value="N/b=20-215"/>
</dbReference>
<dbReference type="PDB" id="4QLT">
    <property type="method" value="X-ray"/>
    <property type="resolution" value="2.80 A"/>
    <property type="chains" value="N/b=20-215"/>
</dbReference>
<dbReference type="PDB" id="4QLU">
    <property type="method" value="X-ray"/>
    <property type="resolution" value="2.80 A"/>
    <property type="chains" value="N/b=20-215"/>
</dbReference>
<dbReference type="PDB" id="4QLV">
    <property type="method" value="X-ray"/>
    <property type="resolution" value="2.90 A"/>
    <property type="chains" value="N/b=20-215"/>
</dbReference>
<dbReference type="PDB" id="4QUX">
    <property type="method" value="X-ray"/>
    <property type="resolution" value="3.00 A"/>
    <property type="chains" value="N/b=20-215"/>
</dbReference>
<dbReference type="PDB" id="4QUY">
    <property type="method" value="X-ray"/>
    <property type="resolution" value="2.80 A"/>
    <property type="chains" value="N/b=20-215"/>
</dbReference>
<dbReference type="PDB" id="4QV0">
    <property type="method" value="X-ray"/>
    <property type="resolution" value="3.10 A"/>
    <property type="chains" value="N/b=20-215"/>
</dbReference>
<dbReference type="PDB" id="4QV1">
    <property type="method" value="X-ray"/>
    <property type="resolution" value="2.50 A"/>
    <property type="chains" value="N/b=20-215"/>
</dbReference>
<dbReference type="PDB" id="4QV3">
    <property type="method" value="X-ray"/>
    <property type="resolution" value="3.00 A"/>
    <property type="chains" value="N/b=20-215"/>
</dbReference>
<dbReference type="PDB" id="4QV4">
    <property type="method" value="X-ray"/>
    <property type="resolution" value="2.70 A"/>
    <property type="chains" value="N/b=20-215"/>
</dbReference>
<dbReference type="PDB" id="4QV5">
    <property type="method" value="X-ray"/>
    <property type="resolution" value="2.70 A"/>
    <property type="chains" value="N/b=20-215"/>
</dbReference>
<dbReference type="PDB" id="4QV6">
    <property type="method" value="X-ray"/>
    <property type="resolution" value="2.80 A"/>
    <property type="chains" value="N/b=20-215"/>
</dbReference>
<dbReference type="PDB" id="4QV7">
    <property type="method" value="X-ray"/>
    <property type="resolution" value="2.60 A"/>
    <property type="chains" value="N/b=20-215"/>
</dbReference>
<dbReference type="PDB" id="4QV8">
    <property type="method" value="X-ray"/>
    <property type="resolution" value="2.90 A"/>
    <property type="chains" value="N/b=20-215"/>
</dbReference>
<dbReference type="PDB" id="4QV9">
    <property type="method" value="X-ray"/>
    <property type="resolution" value="2.60 A"/>
    <property type="chains" value="N/b=20-215"/>
</dbReference>
<dbReference type="PDB" id="4QVL">
    <property type="method" value="X-ray"/>
    <property type="resolution" value="2.80 A"/>
    <property type="chains" value="N/b=20-215"/>
</dbReference>
<dbReference type="PDB" id="4QVM">
    <property type="method" value="X-ray"/>
    <property type="resolution" value="2.80 A"/>
    <property type="chains" value="N/b=20-215"/>
</dbReference>
<dbReference type="PDB" id="4QVN">
    <property type="method" value="X-ray"/>
    <property type="resolution" value="2.90 A"/>
    <property type="chains" value="N/b=20-215"/>
</dbReference>
<dbReference type="PDB" id="4QVP">
    <property type="method" value="X-ray"/>
    <property type="resolution" value="2.30 A"/>
    <property type="chains" value="N/b=20-215"/>
</dbReference>
<dbReference type="PDB" id="4QVQ">
    <property type="method" value="X-ray"/>
    <property type="resolution" value="2.60 A"/>
    <property type="chains" value="N/b=20-215"/>
</dbReference>
<dbReference type="PDB" id="4QVV">
    <property type="method" value="X-ray"/>
    <property type="resolution" value="2.80 A"/>
    <property type="chains" value="N/b=20-215"/>
</dbReference>
<dbReference type="PDB" id="4QVW">
    <property type="method" value="X-ray"/>
    <property type="resolution" value="3.00 A"/>
    <property type="chains" value="N/b=20-215"/>
</dbReference>
<dbReference type="PDB" id="4QVY">
    <property type="method" value="X-ray"/>
    <property type="resolution" value="2.51 A"/>
    <property type="chains" value="N/b=20-215"/>
</dbReference>
<dbReference type="PDB" id="4QW0">
    <property type="method" value="X-ray"/>
    <property type="resolution" value="2.90 A"/>
    <property type="chains" value="N/b=20-215"/>
</dbReference>
<dbReference type="PDB" id="4QW1">
    <property type="method" value="X-ray"/>
    <property type="resolution" value="2.90 A"/>
    <property type="chains" value="N/b=20-215"/>
</dbReference>
<dbReference type="PDB" id="4QW3">
    <property type="method" value="X-ray"/>
    <property type="resolution" value="2.90 A"/>
    <property type="chains" value="N/b=20-215"/>
</dbReference>
<dbReference type="PDB" id="4QW4">
    <property type="method" value="X-ray"/>
    <property type="resolution" value="2.80 A"/>
    <property type="chains" value="N/b=20-215"/>
</dbReference>
<dbReference type="PDB" id="4QW5">
    <property type="method" value="X-ray"/>
    <property type="resolution" value="3.00 A"/>
    <property type="chains" value="N/b=20-215"/>
</dbReference>
<dbReference type="PDB" id="4QW6">
    <property type="method" value="X-ray"/>
    <property type="resolution" value="2.90 A"/>
    <property type="chains" value="N/b=20-215"/>
</dbReference>
<dbReference type="PDB" id="4QW7">
    <property type="method" value="X-ray"/>
    <property type="resolution" value="2.70 A"/>
    <property type="chains" value="N/b=20-215"/>
</dbReference>
<dbReference type="PDB" id="4QWF">
    <property type="method" value="X-ray"/>
    <property type="resolution" value="3.00 A"/>
    <property type="chains" value="N/b=20-215"/>
</dbReference>
<dbReference type="PDB" id="4QWG">
    <property type="method" value="X-ray"/>
    <property type="resolution" value="2.60 A"/>
    <property type="chains" value="N/b=20-215"/>
</dbReference>
<dbReference type="PDB" id="4QWI">
    <property type="method" value="X-ray"/>
    <property type="resolution" value="2.60 A"/>
    <property type="chains" value="N/b=20-215"/>
</dbReference>
<dbReference type="PDB" id="4QWJ">
    <property type="method" value="X-ray"/>
    <property type="resolution" value="2.90 A"/>
    <property type="chains" value="N/b=20-215"/>
</dbReference>
<dbReference type="PDB" id="4QWK">
    <property type="method" value="X-ray"/>
    <property type="resolution" value="2.80 A"/>
    <property type="chains" value="N/b=20-215"/>
</dbReference>
<dbReference type="PDB" id="4QWL">
    <property type="method" value="X-ray"/>
    <property type="resolution" value="2.60 A"/>
    <property type="chains" value="N/b=20-215"/>
</dbReference>
<dbReference type="PDB" id="4QWR">
    <property type="method" value="X-ray"/>
    <property type="resolution" value="2.90 A"/>
    <property type="chains" value="N/b=20-215"/>
</dbReference>
<dbReference type="PDB" id="4QWS">
    <property type="method" value="X-ray"/>
    <property type="resolution" value="3.00 A"/>
    <property type="chains" value="N/b=20-215"/>
</dbReference>
<dbReference type="PDB" id="4QWU">
    <property type="method" value="X-ray"/>
    <property type="resolution" value="3.00 A"/>
    <property type="chains" value="N/b=20-215"/>
</dbReference>
<dbReference type="PDB" id="4QWX">
    <property type="method" value="X-ray"/>
    <property type="resolution" value="2.90 A"/>
    <property type="chains" value="N/b=20-215"/>
</dbReference>
<dbReference type="PDB" id="4QXJ">
    <property type="method" value="X-ray"/>
    <property type="resolution" value="2.80 A"/>
    <property type="chains" value="N/b=20-215"/>
</dbReference>
<dbReference type="PDB" id="4QZ0">
    <property type="method" value="X-ray"/>
    <property type="resolution" value="3.00 A"/>
    <property type="chains" value="N/b=20-215"/>
</dbReference>
<dbReference type="PDB" id="4QZ1">
    <property type="method" value="X-ray"/>
    <property type="resolution" value="3.00 A"/>
    <property type="chains" value="N/b=20-215"/>
</dbReference>
<dbReference type="PDB" id="4QZ2">
    <property type="method" value="X-ray"/>
    <property type="resolution" value="2.70 A"/>
    <property type="chains" value="N/b=20-215"/>
</dbReference>
<dbReference type="PDB" id="4QZ3">
    <property type="method" value="X-ray"/>
    <property type="resolution" value="2.80 A"/>
    <property type="chains" value="N/b=20-215"/>
</dbReference>
<dbReference type="PDB" id="4QZ4">
    <property type="method" value="X-ray"/>
    <property type="resolution" value="3.00 A"/>
    <property type="chains" value="N/b=20-215"/>
</dbReference>
<dbReference type="PDB" id="4QZ5">
    <property type="method" value="X-ray"/>
    <property type="resolution" value="2.80 A"/>
    <property type="chains" value="N/b=20-215"/>
</dbReference>
<dbReference type="PDB" id="4QZ6">
    <property type="method" value="X-ray"/>
    <property type="resolution" value="2.90 A"/>
    <property type="chains" value="N/b=20-215"/>
</dbReference>
<dbReference type="PDB" id="4QZ7">
    <property type="method" value="X-ray"/>
    <property type="resolution" value="2.80 A"/>
    <property type="chains" value="N/b=20-215"/>
</dbReference>
<dbReference type="PDB" id="4QZW">
    <property type="method" value="X-ray"/>
    <property type="resolution" value="3.00 A"/>
    <property type="chains" value="N/b=20-215"/>
</dbReference>
<dbReference type="PDB" id="4QZX">
    <property type="method" value="X-ray"/>
    <property type="resolution" value="2.60 A"/>
    <property type="chains" value="N/b=20-215"/>
</dbReference>
<dbReference type="PDB" id="4QZZ">
    <property type="method" value="X-ray"/>
    <property type="resolution" value="2.90 A"/>
    <property type="chains" value="N/b=20-215"/>
</dbReference>
<dbReference type="PDB" id="4R00">
    <property type="method" value="X-ray"/>
    <property type="resolution" value="2.80 A"/>
    <property type="chains" value="N/b=20-215"/>
</dbReference>
<dbReference type="PDB" id="4R02">
    <property type="method" value="X-ray"/>
    <property type="resolution" value="2.50 A"/>
    <property type="chains" value="N/b=20-215"/>
</dbReference>
<dbReference type="PDB" id="4R17">
    <property type="method" value="X-ray"/>
    <property type="resolution" value="2.10 A"/>
    <property type="chains" value="N/b=20-215"/>
</dbReference>
<dbReference type="PDB" id="4R18">
    <property type="method" value="X-ray"/>
    <property type="resolution" value="2.40 A"/>
    <property type="chains" value="N/b=20-215"/>
</dbReference>
<dbReference type="PDB" id="4RUR">
    <property type="method" value="X-ray"/>
    <property type="resolution" value="2.50 A"/>
    <property type="chains" value="N/b=20-215"/>
</dbReference>
<dbReference type="PDB" id="4V7O">
    <property type="method" value="X-ray"/>
    <property type="resolution" value="3.00 A"/>
    <property type="chains" value="AB/AD/BH/BV=21-215"/>
</dbReference>
<dbReference type="PDB" id="4X6Z">
    <property type="method" value="X-ray"/>
    <property type="resolution" value="2.70 A"/>
    <property type="chains" value="H/V=1-215"/>
</dbReference>
<dbReference type="PDB" id="4Y69">
    <property type="method" value="X-ray"/>
    <property type="resolution" value="2.90 A"/>
    <property type="chains" value="N/b=20-215"/>
</dbReference>
<dbReference type="PDB" id="4Y6A">
    <property type="method" value="X-ray"/>
    <property type="resolution" value="2.60 A"/>
    <property type="chains" value="N/b=20-215"/>
</dbReference>
<dbReference type="PDB" id="4Y6V">
    <property type="method" value="X-ray"/>
    <property type="resolution" value="2.80 A"/>
    <property type="chains" value="N/b=20-215"/>
</dbReference>
<dbReference type="PDB" id="4Y6Z">
    <property type="method" value="X-ray"/>
    <property type="resolution" value="2.70 A"/>
    <property type="chains" value="N/b=20-215"/>
</dbReference>
<dbReference type="PDB" id="4Y70">
    <property type="method" value="X-ray"/>
    <property type="resolution" value="2.40 A"/>
    <property type="chains" value="N/b=20-215"/>
</dbReference>
<dbReference type="PDB" id="4Y74">
    <property type="method" value="X-ray"/>
    <property type="resolution" value="2.70 A"/>
    <property type="chains" value="N/b=20-215"/>
</dbReference>
<dbReference type="PDB" id="4Y75">
    <property type="method" value="X-ray"/>
    <property type="resolution" value="2.80 A"/>
    <property type="chains" value="N/b=20-215"/>
</dbReference>
<dbReference type="PDB" id="4Y77">
    <property type="method" value="X-ray"/>
    <property type="resolution" value="2.50 A"/>
    <property type="chains" value="N/b=20-215"/>
</dbReference>
<dbReference type="PDB" id="4Y78">
    <property type="method" value="X-ray"/>
    <property type="resolution" value="2.80 A"/>
    <property type="chains" value="N/b=20-215"/>
</dbReference>
<dbReference type="PDB" id="4Y7W">
    <property type="method" value="X-ray"/>
    <property type="resolution" value="2.50 A"/>
    <property type="chains" value="N/b=20-215"/>
</dbReference>
<dbReference type="PDB" id="4Y7X">
    <property type="method" value="X-ray"/>
    <property type="resolution" value="2.60 A"/>
    <property type="chains" value="N/b=20-215"/>
</dbReference>
<dbReference type="PDB" id="4Y7Y">
    <property type="method" value="X-ray"/>
    <property type="resolution" value="2.40 A"/>
    <property type="chains" value="N/b=20-215"/>
</dbReference>
<dbReference type="PDB" id="4Y80">
    <property type="method" value="X-ray"/>
    <property type="resolution" value="2.50 A"/>
    <property type="chains" value="N/b=20-215"/>
</dbReference>
<dbReference type="PDB" id="4Y81">
    <property type="method" value="X-ray"/>
    <property type="resolution" value="2.80 A"/>
    <property type="chains" value="N/b=20-215"/>
</dbReference>
<dbReference type="PDB" id="4Y82">
    <property type="method" value="X-ray"/>
    <property type="resolution" value="2.80 A"/>
    <property type="chains" value="N/b=20-215"/>
</dbReference>
<dbReference type="PDB" id="4Y84">
    <property type="method" value="X-ray"/>
    <property type="resolution" value="2.70 A"/>
    <property type="chains" value="N/b=20-215"/>
</dbReference>
<dbReference type="PDB" id="4Y8G">
    <property type="method" value="X-ray"/>
    <property type="resolution" value="2.60 A"/>
    <property type="chains" value="N/b=20-215"/>
</dbReference>
<dbReference type="PDB" id="4Y8H">
    <property type="method" value="X-ray"/>
    <property type="resolution" value="2.50 A"/>
    <property type="chains" value="N/b=20-215"/>
</dbReference>
<dbReference type="PDB" id="4Y8I">
    <property type="method" value="X-ray"/>
    <property type="resolution" value="2.60 A"/>
    <property type="chains" value="N/b=20-215"/>
</dbReference>
<dbReference type="PDB" id="4Y8J">
    <property type="method" value="X-ray"/>
    <property type="resolution" value="2.70 A"/>
    <property type="chains" value="N/b=20-215"/>
</dbReference>
<dbReference type="PDB" id="4Y8K">
    <property type="method" value="X-ray"/>
    <property type="resolution" value="2.60 A"/>
    <property type="chains" value="N/b=20-215"/>
</dbReference>
<dbReference type="PDB" id="4Y8L">
    <property type="method" value="X-ray"/>
    <property type="resolution" value="2.40 A"/>
    <property type="chains" value="N/b=20-215"/>
</dbReference>
<dbReference type="PDB" id="4Y8M">
    <property type="method" value="X-ray"/>
    <property type="resolution" value="2.80 A"/>
    <property type="chains" value="N/b=20-215"/>
</dbReference>
<dbReference type="PDB" id="4Y8N">
    <property type="method" value="X-ray"/>
    <property type="resolution" value="2.60 A"/>
    <property type="chains" value="N/b=20-215"/>
</dbReference>
<dbReference type="PDB" id="4Y8O">
    <property type="method" value="X-ray"/>
    <property type="resolution" value="2.70 A"/>
    <property type="chains" value="N/b=20-215"/>
</dbReference>
<dbReference type="PDB" id="4Y8P">
    <property type="method" value="X-ray"/>
    <property type="resolution" value="2.80 A"/>
    <property type="chains" value="N/b=20-215"/>
</dbReference>
<dbReference type="PDB" id="4Y8Q">
    <property type="method" value="X-ray"/>
    <property type="resolution" value="2.60 A"/>
    <property type="chains" value="N/b=20-215"/>
</dbReference>
<dbReference type="PDB" id="4Y8R">
    <property type="method" value="X-ray"/>
    <property type="resolution" value="2.70 A"/>
    <property type="chains" value="N/b=20-215"/>
</dbReference>
<dbReference type="PDB" id="4Y8S">
    <property type="method" value="X-ray"/>
    <property type="resolution" value="2.70 A"/>
    <property type="chains" value="N/b=20-215"/>
</dbReference>
<dbReference type="PDB" id="4Y8T">
    <property type="method" value="X-ray"/>
    <property type="resolution" value="2.70 A"/>
    <property type="chains" value="N/b=20-215"/>
</dbReference>
<dbReference type="PDB" id="4Y8U">
    <property type="method" value="X-ray"/>
    <property type="resolution" value="2.90 A"/>
    <property type="chains" value="N/b=20-215"/>
</dbReference>
<dbReference type="PDB" id="4Y9Y">
    <property type="method" value="X-ray"/>
    <property type="resolution" value="2.80 A"/>
    <property type="chains" value="N/b=20-215"/>
</dbReference>
<dbReference type="PDB" id="4Y9Z">
    <property type="method" value="X-ray"/>
    <property type="resolution" value="2.80 A"/>
    <property type="chains" value="N/b=20-215"/>
</dbReference>
<dbReference type="PDB" id="4YA0">
    <property type="method" value="X-ray"/>
    <property type="resolution" value="2.80 A"/>
    <property type="chains" value="N/b=20-215"/>
</dbReference>
<dbReference type="PDB" id="4YA1">
    <property type="method" value="X-ray"/>
    <property type="resolution" value="2.90 A"/>
    <property type="chains" value="N/b=20-215"/>
</dbReference>
<dbReference type="PDB" id="4YA2">
    <property type="method" value="X-ray"/>
    <property type="resolution" value="2.70 A"/>
    <property type="chains" value="N/b=20-215"/>
</dbReference>
<dbReference type="PDB" id="4YA3">
    <property type="method" value="X-ray"/>
    <property type="resolution" value="2.70 A"/>
    <property type="chains" value="N/b=20-215"/>
</dbReference>
<dbReference type="PDB" id="4YA4">
    <property type="method" value="X-ray"/>
    <property type="resolution" value="2.90 A"/>
    <property type="chains" value="N/b=20-215"/>
</dbReference>
<dbReference type="PDB" id="4YA5">
    <property type="method" value="X-ray"/>
    <property type="resolution" value="2.50 A"/>
    <property type="chains" value="N/b=20-215"/>
</dbReference>
<dbReference type="PDB" id="4YA7">
    <property type="method" value="X-ray"/>
    <property type="resolution" value="2.70 A"/>
    <property type="chains" value="N/b=20-215"/>
</dbReference>
<dbReference type="PDB" id="4YA9">
    <property type="method" value="X-ray"/>
    <property type="resolution" value="2.70 A"/>
    <property type="chains" value="N/b=20-215"/>
</dbReference>
<dbReference type="PDB" id="4Z1L">
    <property type="method" value="X-ray"/>
    <property type="resolution" value="3.00 A"/>
    <property type="chains" value="N/b=20-215"/>
</dbReference>
<dbReference type="PDB" id="5A5B">
    <property type="method" value="EM"/>
    <property type="resolution" value="9.50 A"/>
    <property type="chains" value="1=1-215"/>
</dbReference>
<dbReference type="PDB" id="5AHJ">
    <property type="method" value="X-ray"/>
    <property type="resolution" value="2.80 A"/>
    <property type="chains" value="N/b=20-215"/>
</dbReference>
<dbReference type="PDB" id="5BOU">
    <property type="method" value="X-ray"/>
    <property type="resolution" value="2.60 A"/>
    <property type="chains" value="N/b=20-215"/>
</dbReference>
<dbReference type="PDB" id="5BXL">
    <property type="method" value="X-ray"/>
    <property type="resolution" value="2.80 A"/>
    <property type="chains" value="N/b=20-215"/>
</dbReference>
<dbReference type="PDB" id="5BXN">
    <property type="method" value="X-ray"/>
    <property type="resolution" value="2.80 A"/>
    <property type="chains" value="N/b=20-215"/>
</dbReference>
<dbReference type="PDB" id="5CGF">
    <property type="method" value="X-ray"/>
    <property type="resolution" value="2.80 A"/>
    <property type="chains" value="N/b=20-215"/>
</dbReference>
<dbReference type="PDB" id="5CGG">
    <property type="method" value="X-ray"/>
    <property type="resolution" value="2.90 A"/>
    <property type="chains" value="N/b=20-215"/>
</dbReference>
<dbReference type="PDB" id="5CGH">
    <property type="method" value="X-ray"/>
    <property type="resolution" value="2.50 A"/>
    <property type="chains" value="N/b=20-215"/>
</dbReference>
<dbReference type="PDB" id="5CGI">
    <property type="method" value="X-ray"/>
    <property type="resolution" value="2.80 A"/>
    <property type="chains" value="N/b=20-215"/>
</dbReference>
<dbReference type="PDB" id="5CZ4">
    <property type="method" value="X-ray"/>
    <property type="resolution" value="2.30 A"/>
    <property type="chains" value="N/b=20-215"/>
</dbReference>
<dbReference type="PDB" id="5CZ5">
    <property type="method" value="X-ray"/>
    <property type="resolution" value="2.80 A"/>
    <property type="chains" value="N/b=10-215"/>
</dbReference>
<dbReference type="PDB" id="5CZ6">
    <property type="method" value="X-ray"/>
    <property type="resolution" value="2.70 A"/>
    <property type="chains" value="N/b=20-215"/>
</dbReference>
<dbReference type="PDB" id="5CZ7">
    <property type="method" value="X-ray"/>
    <property type="resolution" value="2.50 A"/>
    <property type="chains" value="N/b=20-215"/>
</dbReference>
<dbReference type="PDB" id="5CZ8">
    <property type="method" value="X-ray"/>
    <property type="resolution" value="2.80 A"/>
    <property type="chains" value="N/b=20-215"/>
</dbReference>
<dbReference type="PDB" id="5CZ9">
    <property type="method" value="X-ray"/>
    <property type="resolution" value="2.90 A"/>
    <property type="chains" value="N/b=20-215"/>
</dbReference>
<dbReference type="PDB" id="5CZA">
    <property type="method" value="X-ray"/>
    <property type="resolution" value="2.50 A"/>
    <property type="chains" value="N/b=20-215"/>
</dbReference>
<dbReference type="PDB" id="5D0S">
    <property type="method" value="X-ray"/>
    <property type="resolution" value="2.50 A"/>
    <property type="chains" value="N/b=20-215"/>
</dbReference>
<dbReference type="PDB" id="5D0T">
    <property type="method" value="X-ray"/>
    <property type="resolution" value="2.60 A"/>
    <property type="chains" value="N/b=20-215"/>
</dbReference>
<dbReference type="PDB" id="5D0V">
    <property type="method" value="X-ray"/>
    <property type="resolution" value="2.90 A"/>
    <property type="chains" value="N/b=20-215"/>
</dbReference>
<dbReference type="PDB" id="5D0W">
    <property type="method" value="X-ray"/>
    <property type="resolution" value="2.80 A"/>
    <property type="chains" value="N/b=20-215"/>
</dbReference>
<dbReference type="PDB" id="5D0X">
    <property type="method" value="X-ray"/>
    <property type="resolution" value="2.60 A"/>
    <property type="chains" value="N/b=20-215"/>
</dbReference>
<dbReference type="PDB" id="5D0Z">
    <property type="method" value="X-ray"/>
    <property type="resolution" value="2.90 A"/>
    <property type="chains" value="N/b=20-215"/>
</dbReference>
<dbReference type="PDB" id="5DKI">
    <property type="method" value="X-ray"/>
    <property type="resolution" value="2.80 A"/>
    <property type="chains" value="N/b=20-215"/>
</dbReference>
<dbReference type="PDB" id="5DKJ">
    <property type="method" value="X-ray"/>
    <property type="resolution" value="2.80 A"/>
    <property type="chains" value="N/b=20-215"/>
</dbReference>
<dbReference type="PDB" id="5FG7">
    <property type="method" value="X-ray"/>
    <property type="resolution" value="2.70 A"/>
    <property type="chains" value="N/b=20-215"/>
</dbReference>
<dbReference type="PDB" id="5FG9">
    <property type="method" value="X-ray"/>
    <property type="resolution" value="2.60 A"/>
    <property type="chains" value="N/b=20-215"/>
</dbReference>
<dbReference type="PDB" id="5FGA">
    <property type="method" value="X-ray"/>
    <property type="resolution" value="2.70 A"/>
    <property type="chains" value="N/b=20-215"/>
</dbReference>
<dbReference type="PDB" id="5FGD">
    <property type="method" value="X-ray"/>
    <property type="resolution" value="2.80 A"/>
    <property type="chains" value="N/b=20-215"/>
</dbReference>
<dbReference type="PDB" id="5FGE">
    <property type="method" value="X-ray"/>
    <property type="resolution" value="2.60 A"/>
    <property type="chains" value="N/b=20-215"/>
</dbReference>
<dbReference type="PDB" id="5FGF">
    <property type="method" value="X-ray"/>
    <property type="resolution" value="2.60 A"/>
    <property type="chains" value="N/b=20-215"/>
</dbReference>
<dbReference type="PDB" id="5FGG">
    <property type="method" value="X-ray"/>
    <property type="resolution" value="2.70 A"/>
    <property type="chains" value="N/b=20-215"/>
</dbReference>
<dbReference type="PDB" id="5FGH">
    <property type="method" value="X-ray"/>
    <property type="resolution" value="2.80 A"/>
    <property type="chains" value="N/b=20-215"/>
</dbReference>
<dbReference type="PDB" id="5FGI">
    <property type="method" value="X-ray"/>
    <property type="resolution" value="2.90 A"/>
    <property type="chains" value="N/b=3-215"/>
</dbReference>
<dbReference type="PDB" id="5FHS">
    <property type="method" value="X-ray"/>
    <property type="resolution" value="2.70 A"/>
    <property type="chains" value="N/b=20-215"/>
</dbReference>
<dbReference type="PDB" id="5JHR">
    <property type="method" value="X-ray"/>
    <property type="resolution" value="2.90 A"/>
    <property type="chains" value="N/b=20-215"/>
</dbReference>
<dbReference type="PDB" id="5JHS">
    <property type="method" value="X-ray"/>
    <property type="resolution" value="3.00 A"/>
    <property type="chains" value="N/b=20-215"/>
</dbReference>
<dbReference type="PDB" id="5L52">
    <property type="method" value="X-ray"/>
    <property type="resolution" value="2.70 A"/>
    <property type="chains" value="N/b=20-215"/>
</dbReference>
<dbReference type="PDB" id="5L54">
    <property type="method" value="X-ray"/>
    <property type="resolution" value="2.80 A"/>
    <property type="chains" value="N/b=20-215"/>
</dbReference>
<dbReference type="PDB" id="5L55">
    <property type="method" value="X-ray"/>
    <property type="resolution" value="2.90 A"/>
    <property type="chains" value="N/b=20-215"/>
</dbReference>
<dbReference type="PDB" id="5L5A">
    <property type="method" value="X-ray"/>
    <property type="resolution" value="2.40 A"/>
    <property type="chains" value="N/b=20-215"/>
</dbReference>
<dbReference type="PDB" id="5L5B">
    <property type="method" value="X-ray"/>
    <property type="resolution" value="2.80 A"/>
    <property type="chains" value="N/b=20-215"/>
</dbReference>
<dbReference type="PDB" id="5L5D">
    <property type="method" value="X-ray"/>
    <property type="resolution" value="2.80 A"/>
    <property type="chains" value="N/b=20-215"/>
</dbReference>
<dbReference type="PDB" id="5L5E">
    <property type="method" value="X-ray"/>
    <property type="resolution" value="2.90 A"/>
    <property type="chains" value="N/b=20-215"/>
</dbReference>
<dbReference type="PDB" id="5L5F">
    <property type="method" value="X-ray"/>
    <property type="resolution" value="2.50 A"/>
    <property type="chains" value="N/b=20-215"/>
</dbReference>
<dbReference type="PDB" id="5L5H">
    <property type="method" value="X-ray"/>
    <property type="resolution" value="2.60 A"/>
    <property type="chains" value="N/b=20-215"/>
</dbReference>
<dbReference type="PDB" id="5L5I">
    <property type="method" value="X-ray"/>
    <property type="resolution" value="2.90 A"/>
    <property type="chains" value="N/b=20-215"/>
</dbReference>
<dbReference type="PDB" id="5L5J">
    <property type="method" value="X-ray"/>
    <property type="resolution" value="2.90 A"/>
    <property type="chains" value="N/b=20-215"/>
</dbReference>
<dbReference type="PDB" id="5L5O">
    <property type="method" value="X-ray"/>
    <property type="resolution" value="2.60 A"/>
    <property type="chains" value="N/b=20-215"/>
</dbReference>
<dbReference type="PDB" id="5L5P">
    <property type="method" value="X-ray"/>
    <property type="resolution" value="2.80 A"/>
    <property type="chains" value="N/b=20-215"/>
</dbReference>
<dbReference type="PDB" id="5L5Q">
    <property type="method" value="X-ray"/>
    <property type="resolution" value="2.80 A"/>
    <property type="chains" value="N/b=20-215"/>
</dbReference>
<dbReference type="PDB" id="5L5R">
    <property type="method" value="X-ray"/>
    <property type="resolution" value="2.90 A"/>
    <property type="chains" value="N/b=20-215"/>
</dbReference>
<dbReference type="PDB" id="5L5S">
    <property type="method" value="X-ray"/>
    <property type="resolution" value="2.60 A"/>
    <property type="chains" value="N/b=20-215"/>
</dbReference>
<dbReference type="PDB" id="5L5T">
    <property type="method" value="X-ray"/>
    <property type="resolution" value="2.90 A"/>
    <property type="chains" value="N/b=20-215"/>
</dbReference>
<dbReference type="PDB" id="5L5U">
    <property type="method" value="X-ray"/>
    <property type="resolution" value="2.60 A"/>
    <property type="chains" value="N/b=20-215"/>
</dbReference>
<dbReference type="PDB" id="5L5V">
    <property type="method" value="X-ray"/>
    <property type="resolution" value="2.70 A"/>
    <property type="chains" value="N/b=20-215"/>
</dbReference>
<dbReference type="PDB" id="5L5W">
    <property type="method" value="X-ray"/>
    <property type="resolution" value="2.80 A"/>
    <property type="chains" value="N/b=20-215"/>
</dbReference>
<dbReference type="PDB" id="5L5X">
    <property type="method" value="X-ray"/>
    <property type="resolution" value="2.90 A"/>
    <property type="chains" value="N/b=20-215"/>
</dbReference>
<dbReference type="PDB" id="5L5Y">
    <property type="method" value="X-ray"/>
    <property type="resolution" value="2.70 A"/>
    <property type="chains" value="N/b=20-215"/>
</dbReference>
<dbReference type="PDB" id="5L5Z">
    <property type="method" value="X-ray"/>
    <property type="resolution" value="2.70 A"/>
    <property type="chains" value="N/b=20-215"/>
</dbReference>
<dbReference type="PDB" id="5L60">
    <property type="method" value="X-ray"/>
    <property type="resolution" value="2.70 A"/>
    <property type="chains" value="N/b=20-215"/>
</dbReference>
<dbReference type="PDB" id="5L61">
    <property type="method" value="X-ray"/>
    <property type="resolution" value="2.80 A"/>
    <property type="chains" value="N/b=20-215"/>
</dbReference>
<dbReference type="PDB" id="5L62">
    <property type="method" value="X-ray"/>
    <property type="resolution" value="2.80 A"/>
    <property type="chains" value="N/b=20-215"/>
</dbReference>
<dbReference type="PDB" id="5L63">
    <property type="method" value="X-ray"/>
    <property type="resolution" value="2.70 A"/>
    <property type="chains" value="N/b=20-215"/>
</dbReference>
<dbReference type="PDB" id="5L64">
    <property type="method" value="X-ray"/>
    <property type="resolution" value="2.70 A"/>
    <property type="chains" value="N/b=20-215"/>
</dbReference>
<dbReference type="PDB" id="5L65">
    <property type="method" value="X-ray"/>
    <property type="resolution" value="2.90 A"/>
    <property type="chains" value="N/b=20-215"/>
</dbReference>
<dbReference type="PDB" id="5L66">
    <property type="method" value="X-ray"/>
    <property type="resolution" value="2.80 A"/>
    <property type="chains" value="N/b=20-215"/>
</dbReference>
<dbReference type="PDB" id="5L67">
    <property type="method" value="X-ray"/>
    <property type="resolution" value="2.60 A"/>
    <property type="chains" value="N/b=20-215"/>
</dbReference>
<dbReference type="PDB" id="5L68">
    <property type="method" value="X-ray"/>
    <property type="resolution" value="2.80 A"/>
    <property type="chains" value="N/b=20-215"/>
</dbReference>
<dbReference type="PDB" id="5L69">
    <property type="method" value="X-ray"/>
    <property type="resolution" value="2.70 A"/>
    <property type="chains" value="N/b=20-215"/>
</dbReference>
<dbReference type="PDB" id="5L6A">
    <property type="method" value="X-ray"/>
    <property type="resolution" value="2.80 A"/>
    <property type="chains" value="N/b=20-215"/>
</dbReference>
<dbReference type="PDB" id="5L6B">
    <property type="method" value="X-ray"/>
    <property type="resolution" value="2.60 A"/>
    <property type="chains" value="N/b=20-215"/>
</dbReference>
<dbReference type="PDB" id="5L6C">
    <property type="method" value="X-ray"/>
    <property type="resolution" value="2.60 A"/>
    <property type="chains" value="N/b=20-215"/>
</dbReference>
<dbReference type="PDB" id="5LAI">
    <property type="method" value="X-ray"/>
    <property type="resolution" value="2.50 A"/>
    <property type="chains" value="N/b=20-215"/>
</dbReference>
<dbReference type="PDB" id="5LAJ">
    <property type="method" value="X-ray"/>
    <property type="resolution" value="2.90 A"/>
    <property type="chains" value="N/b=20-215"/>
</dbReference>
<dbReference type="PDB" id="5LTT">
    <property type="method" value="X-ray"/>
    <property type="resolution" value="2.70 A"/>
    <property type="chains" value="N/b=20-215"/>
</dbReference>
<dbReference type="PDB" id="5M2B">
    <property type="method" value="X-ray"/>
    <property type="resolution" value="2.70 A"/>
    <property type="chains" value="N/b=20-215"/>
</dbReference>
<dbReference type="PDB" id="5MP9">
    <property type="method" value="EM"/>
    <property type="resolution" value="4.10 A"/>
    <property type="chains" value="1/h=1-215"/>
</dbReference>
<dbReference type="PDB" id="5MPA">
    <property type="method" value="EM"/>
    <property type="resolution" value="4.50 A"/>
    <property type="chains" value="1/h=1-215"/>
</dbReference>
<dbReference type="PDB" id="5MPB">
    <property type="method" value="EM"/>
    <property type="resolution" value="7.80 A"/>
    <property type="chains" value="1/h=1-215"/>
</dbReference>
<dbReference type="PDB" id="5MPC">
    <property type="method" value="EM"/>
    <property type="resolution" value="7.70 A"/>
    <property type="chains" value="1/h=1-215"/>
</dbReference>
<dbReference type="PDB" id="5NIF">
    <property type="method" value="X-ray"/>
    <property type="resolution" value="3.00 A"/>
    <property type="chains" value="H/V=1-215"/>
</dbReference>
<dbReference type="PDB" id="5WVI">
    <property type="method" value="EM"/>
    <property type="resolution" value="6.30 A"/>
    <property type="chains" value="1/b=1-215"/>
</dbReference>
<dbReference type="PDB" id="5WVK">
    <property type="method" value="EM"/>
    <property type="resolution" value="4.20 A"/>
    <property type="chains" value="1/b=1-215"/>
</dbReference>
<dbReference type="PDB" id="6EF3">
    <property type="method" value="EM"/>
    <property type="resolution" value="4.17 A"/>
    <property type="chains" value="1=1-215"/>
</dbReference>
<dbReference type="PDB" id="6FVT">
    <property type="method" value="EM"/>
    <property type="resolution" value="4.10 A"/>
    <property type="chains" value="1/h=20-215"/>
</dbReference>
<dbReference type="PDB" id="6FVU">
    <property type="method" value="EM"/>
    <property type="resolution" value="4.50 A"/>
    <property type="chains" value="1/h=20-215"/>
</dbReference>
<dbReference type="PDB" id="6FVV">
    <property type="method" value="EM"/>
    <property type="resolution" value="5.40 A"/>
    <property type="chains" value="1/h=20-215"/>
</dbReference>
<dbReference type="PDB" id="6FVW">
    <property type="method" value="EM"/>
    <property type="resolution" value="4.50 A"/>
    <property type="chains" value="1/h=20-215"/>
</dbReference>
<dbReference type="PDB" id="6FVX">
    <property type="method" value="EM"/>
    <property type="resolution" value="4.90 A"/>
    <property type="chains" value="1/h=20-215"/>
</dbReference>
<dbReference type="PDB" id="6FVY">
    <property type="method" value="EM"/>
    <property type="resolution" value="6.10 A"/>
    <property type="chains" value="1/h=20-215"/>
</dbReference>
<dbReference type="PDB" id="6G7F">
    <property type="method" value="X-ray"/>
    <property type="resolution" value="2.70 A"/>
    <property type="chains" value="N/b=20-215"/>
</dbReference>
<dbReference type="PDB" id="6G8M">
    <property type="method" value="X-ray"/>
    <property type="resolution" value="2.70 A"/>
    <property type="chains" value="N/b=20-215"/>
</dbReference>
<dbReference type="PDB" id="6G8N">
    <property type="method" value="X-ray"/>
    <property type="resolution" value="3.00 A"/>
    <property type="chains" value="N/b=20-215"/>
</dbReference>
<dbReference type="PDB" id="6GOP">
    <property type="method" value="X-ray"/>
    <property type="resolution" value="2.90 A"/>
    <property type="chains" value="N/b=20-215"/>
</dbReference>
<dbReference type="PDB" id="6H39">
    <property type="method" value="X-ray"/>
    <property type="resolution" value="2.50 A"/>
    <property type="chains" value="N/b=20-215"/>
</dbReference>
<dbReference type="PDB" id="6HTB">
    <property type="method" value="X-ray"/>
    <property type="resolution" value="2.70 A"/>
    <property type="chains" value="N/b=20-215"/>
</dbReference>
<dbReference type="PDB" id="6HTC">
    <property type="method" value="X-ray"/>
    <property type="resolution" value="2.80 A"/>
    <property type="chains" value="N/b=20-215"/>
</dbReference>
<dbReference type="PDB" id="6HTD">
    <property type="method" value="X-ray"/>
    <property type="resolution" value="3.00 A"/>
    <property type="chains" value="N/b=20-215"/>
</dbReference>
<dbReference type="PDB" id="6HTP">
    <property type="method" value="X-ray"/>
    <property type="resolution" value="3.00 A"/>
    <property type="chains" value="N/b=20-215"/>
</dbReference>
<dbReference type="PDB" id="6HTR">
    <property type="method" value="X-ray"/>
    <property type="resolution" value="2.60 A"/>
    <property type="chains" value="N/b=20-215"/>
</dbReference>
<dbReference type="PDB" id="6HUB">
    <property type="method" value="X-ray"/>
    <property type="resolution" value="2.90 A"/>
    <property type="chains" value="N/b=20-215"/>
</dbReference>
<dbReference type="PDB" id="6HUC">
    <property type="method" value="X-ray"/>
    <property type="resolution" value="3.00 A"/>
    <property type="chains" value="N/b=20-215"/>
</dbReference>
<dbReference type="PDB" id="6HUQ">
    <property type="method" value="X-ray"/>
    <property type="resolution" value="3.00 A"/>
    <property type="chains" value="N/b=20-215"/>
</dbReference>
<dbReference type="PDB" id="6HUU">
    <property type="method" value="X-ray"/>
    <property type="resolution" value="2.80 A"/>
    <property type="chains" value="N/b=20-215"/>
</dbReference>
<dbReference type="PDB" id="6HUV">
    <property type="method" value="X-ray"/>
    <property type="resolution" value="3.10 A"/>
    <property type="chains" value="N/b=20-215"/>
</dbReference>
<dbReference type="PDB" id="6HV3">
    <property type="method" value="X-ray"/>
    <property type="resolution" value="2.70 A"/>
    <property type="chains" value="N/b=20-215"/>
</dbReference>
<dbReference type="PDB" id="6HV4">
    <property type="method" value="X-ray"/>
    <property type="resolution" value="3.00 A"/>
    <property type="chains" value="N/b=20-215"/>
</dbReference>
<dbReference type="PDB" id="6HV5">
    <property type="method" value="X-ray"/>
    <property type="resolution" value="3.00 A"/>
    <property type="chains" value="N/b=20-215"/>
</dbReference>
<dbReference type="PDB" id="6HV7">
    <property type="method" value="X-ray"/>
    <property type="resolution" value="3.40 A"/>
    <property type="chains" value="N/b=20-215"/>
</dbReference>
<dbReference type="PDB" id="6HVA">
    <property type="method" value="X-ray"/>
    <property type="resolution" value="2.90 A"/>
    <property type="chains" value="N/b=20-215"/>
</dbReference>
<dbReference type="PDB" id="6HVR">
    <property type="method" value="X-ray"/>
    <property type="resolution" value="2.70 A"/>
    <property type="chains" value="N/b=20-215"/>
</dbReference>
<dbReference type="PDB" id="6HVS">
    <property type="method" value="X-ray"/>
    <property type="resolution" value="3.10 A"/>
    <property type="chains" value="N/b=20-215"/>
</dbReference>
<dbReference type="PDB" id="6HVT">
    <property type="method" value="X-ray"/>
    <property type="resolution" value="2.90 A"/>
    <property type="chains" value="N/b=20-215"/>
</dbReference>
<dbReference type="PDB" id="6HVU">
    <property type="method" value="X-ray"/>
    <property type="resolution" value="2.90 A"/>
    <property type="chains" value="N/b=20-215"/>
</dbReference>
<dbReference type="PDB" id="6HVV">
    <property type="method" value="X-ray"/>
    <property type="resolution" value="2.70 A"/>
    <property type="chains" value="N/b=20-215"/>
</dbReference>
<dbReference type="PDB" id="6HVW">
    <property type="method" value="X-ray"/>
    <property type="resolution" value="3.00 A"/>
    <property type="chains" value="N/b=20-215"/>
</dbReference>
<dbReference type="PDB" id="6HVX">
    <property type="method" value="X-ray"/>
    <property type="resolution" value="2.80 A"/>
    <property type="chains" value="N/b=20-215"/>
</dbReference>
<dbReference type="PDB" id="6HVY">
    <property type="method" value="X-ray"/>
    <property type="resolution" value="2.70 A"/>
    <property type="chains" value="N/b=20-215"/>
</dbReference>
<dbReference type="PDB" id="6HW0">
    <property type="method" value="X-ray"/>
    <property type="resolution" value="2.80 A"/>
    <property type="chains" value="N/b=20-215"/>
</dbReference>
<dbReference type="PDB" id="6HW3">
    <property type="method" value="X-ray"/>
    <property type="resolution" value="2.60 A"/>
    <property type="chains" value="N/b=20-215"/>
</dbReference>
<dbReference type="PDB" id="6HW4">
    <property type="method" value="X-ray"/>
    <property type="resolution" value="2.90 A"/>
    <property type="chains" value="N/b=20-215"/>
</dbReference>
<dbReference type="PDB" id="6HW5">
    <property type="method" value="X-ray"/>
    <property type="resolution" value="2.90 A"/>
    <property type="chains" value="N/b=20-215"/>
</dbReference>
<dbReference type="PDB" id="6HW6">
    <property type="method" value="X-ray"/>
    <property type="resolution" value="2.70 A"/>
    <property type="chains" value="N/b=20-215"/>
</dbReference>
<dbReference type="PDB" id="6HW7">
    <property type="method" value="X-ray"/>
    <property type="resolution" value="2.70 A"/>
    <property type="chains" value="N/b=20-215"/>
</dbReference>
<dbReference type="PDB" id="6HW8">
    <property type="method" value="X-ray"/>
    <property type="resolution" value="2.80 A"/>
    <property type="chains" value="N/b=20-215"/>
</dbReference>
<dbReference type="PDB" id="6HW9">
    <property type="method" value="X-ray"/>
    <property type="resolution" value="2.80 A"/>
    <property type="chains" value="N/b=20-215"/>
</dbReference>
<dbReference type="PDB" id="6HWA">
    <property type="method" value="X-ray"/>
    <property type="resolution" value="2.80 A"/>
    <property type="chains" value="N/b=20-215"/>
</dbReference>
<dbReference type="PDB" id="6HWB">
    <property type="method" value="X-ray"/>
    <property type="resolution" value="2.60 A"/>
    <property type="chains" value="N/b=20-215"/>
</dbReference>
<dbReference type="PDB" id="6HWC">
    <property type="method" value="X-ray"/>
    <property type="resolution" value="2.80 A"/>
    <property type="chains" value="N/b=20-215"/>
</dbReference>
<dbReference type="PDB" id="6HWD">
    <property type="method" value="X-ray"/>
    <property type="resolution" value="2.80 A"/>
    <property type="chains" value="N/b=20-215"/>
</dbReference>
<dbReference type="PDB" id="6HWE">
    <property type="method" value="X-ray"/>
    <property type="resolution" value="2.30 A"/>
    <property type="chains" value="N/b=20-215"/>
</dbReference>
<dbReference type="PDB" id="6HWF">
    <property type="method" value="X-ray"/>
    <property type="resolution" value="2.50 A"/>
    <property type="chains" value="N/b=20-215"/>
</dbReference>
<dbReference type="PDB" id="6J2C">
    <property type="method" value="EM"/>
    <property type="resolution" value="7.00 A"/>
    <property type="chains" value="1/b=1-215"/>
</dbReference>
<dbReference type="PDB" id="6J2N">
    <property type="method" value="EM"/>
    <property type="resolution" value="7.50 A"/>
    <property type="chains" value="1/b=1-215"/>
</dbReference>
<dbReference type="PDB" id="6J2Q">
    <property type="method" value="EM"/>
    <property type="resolution" value="3.80 A"/>
    <property type="chains" value="1/b=1-215"/>
</dbReference>
<dbReference type="PDB" id="6J2X">
    <property type="method" value="EM"/>
    <property type="resolution" value="3.80 A"/>
    <property type="chains" value="1/b=1-215"/>
</dbReference>
<dbReference type="PDB" id="6J30">
    <property type="method" value="EM"/>
    <property type="resolution" value="4.50 A"/>
    <property type="chains" value="1/b=1-215"/>
</dbReference>
<dbReference type="PDB" id="6ZOU">
    <property type="method" value="X-ray"/>
    <property type="resolution" value="2.90 A"/>
    <property type="chains" value="N/b=20-215"/>
</dbReference>
<dbReference type="PDB" id="6ZP6">
    <property type="method" value="X-ray"/>
    <property type="resolution" value="2.80 A"/>
    <property type="chains" value="N/b=20-215"/>
</dbReference>
<dbReference type="PDB" id="6ZP8">
    <property type="method" value="X-ray"/>
    <property type="resolution" value="3.00 A"/>
    <property type="chains" value="N/b=20-215"/>
</dbReference>
<dbReference type="PDB" id="7LS5">
    <property type="method" value="EM"/>
    <property type="resolution" value="2.74 A"/>
    <property type="chains" value="H/V=1-215"/>
</dbReference>
<dbReference type="PDB" id="7O2L">
    <property type="method" value="X-ray"/>
    <property type="resolution" value="3.00 A"/>
    <property type="chains" value="N/b=20-215"/>
</dbReference>
<dbReference type="PDB" id="7QO3">
    <property type="method" value="EM"/>
    <property type="resolution" value="6.10 A"/>
    <property type="chains" value="1/h=1-215"/>
</dbReference>
<dbReference type="PDB" id="7QO5">
    <property type="method" value="EM"/>
    <property type="resolution" value="6.00 A"/>
    <property type="chains" value="1/h=1-215"/>
</dbReference>
<dbReference type="PDB" id="7QO6">
    <property type="method" value="EM"/>
    <property type="resolution" value="6.30 A"/>
    <property type="chains" value="1/h=1-215"/>
</dbReference>
<dbReference type="PDB" id="7TEJ">
    <property type="method" value="EM"/>
    <property type="resolution" value="2.74 A"/>
    <property type="chains" value="H/V=1-215"/>
</dbReference>
<dbReference type="PDB" id="7TEO">
    <property type="method" value="EM"/>
    <property type="resolution" value="2.97 A"/>
    <property type="chains" value="H/V=1-215"/>
</dbReference>
<dbReference type="PDB" id="8BW1">
    <property type="method" value="X-ray"/>
    <property type="resolution" value="3.25 A"/>
    <property type="chains" value="N/b=20-215"/>
</dbReference>
<dbReference type="PDB" id="8OHZ">
    <property type="method" value="X-ray"/>
    <property type="resolution" value="2.65 A"/>
    <property type="chains" value="N/b=20-215"/>
</dbReference>
<dbReference type="PDB" id="8OI1">
    <property type="method" value="X-ray"/>
    <property type="resolution" value="2.95 A"/>
    <property type="chains" value="N/b=20-215"/>
</dbReference>
<dbReference type="PDB" id="8OLR">
    <property type="method" value="X-ray"/>
    <property type="resolution" value="2.80 A"/>
    <property type="chains" value="N/b=20-215"/>
</dbReference>
<dbReference type="PDB" id="8RHJ">
    <property type="method" value="X-ray"/>
    <property type="resolution" value="3.05 A"/>
    <property type="chains" value="N/b=20-215"/>
</dbReference>
<dbReference type="PDB" id="8RHK">
    <property type="method" value="X-ray"/>
    <property type="resolution" value="2.80 A"/>
    <property type="chains" value="N/b=20-215"/>
</dbReference>
<dbReference type="PDB" id="8RHL">
    <property type="method" value="X-ray"/>
    <property type="resolution" value="3.20 A"/>
    <property type="chains" value="N/b=20-215"/>
</dbReference>
<dbReference type="PDB" id="8RVL">
    <property type="method" value="EM"/>
    <property type="resolution" value="2.14 A"/>
    <property type="chains" value="H/V=1-215"/>
</dbReference>
<dbReference type="PDB" id="8RVO">
    <property type="method" value="EM"/>
    <property type="resolution" value="2.69 A"/>
    <property type="chains" value="H/V=1-215"/>
</dbReference>
<dbReference type="PDB" id="8RVP">
    <property type="method" value="EM"/>
    <property type="resolution" value="2.28 A"/>
    <property type="chains" value="H/V=1-215"/>
</dbReference>
<dbReference type="PDB" id="8RVQ">
    <property type="method" value="EM"/>
    <property type="resolution" value="2.02 A"/>
    <property type="chains" value="H/V=20-215"/>
</dbReference>
<dbReference type="PDB" id="8T08">
    <property type="method" value="EM"/>
    <property type="resolution" value="3.00 A"/>
    <property type="chains" value="N/e=1-215"/>
</dbReference>
<dbReference type="PDB" id="8T0M">
    <property type="method" value="EM"/>
    <property type="resolution" value="2.40 A"/>
    <property type="chains" value="H/V=1-215"/>
</dbReference>
<dbReference type="PDB" id="8U6Y">
    <property type="method" value="EM"/>
    <property type="resolution" value="2.80 A"/>
    <property type="chains" value="N/e=1-215"/>
</dbReference>
<dbReference type="PDB" id="8U7U">
    <property type="method" value="EM"/>
    <property type="resolution" value="2.16 A"/>
    <property type="chains" value="H/V=1-215"/>
</dbReference>
<dbReference type="PDB" id="9EY9">
    <property type="method" value="X-ray"/>
    <property type="resolution" value="3.10 A"/>
    <property type="chains" value="N/b=20-215"/>
</dbReference>
<dbReference type="PDB" id="9FST">
    <property type="method" value="X-ray"/>
    <property type="resolution" value="2.75 A"/>
    <property type="chains" value="N/b=71-215"/>
</dbReference>
<dbReference type="PDB" id="9FSV">
    <property type="method" value="X-ray"/>
    <property type="resolution" value="2.75 A"/>
    <property type="chains" value="N/b=20-215"/>
</dbReference>
<dbReference type="PDB" id="9FT0">
    <property type="method" value="X-ray"/>
    <property type="resolution" value="2.75 A"/>
    <property type="chains" value="N/b=20-215"/>
</dbReference>
<dbReference type="PDB" id="9FT1">
    <property type="method" value="X-ray"/>
    <property type="resolution" value="2.60 A"/>
    <property type="chains" value="N/b=20-215"/>
</dbReference>
<dbReference type="PDB" id="9GBK">
    <property type="method" value="EM"/>
    <property type="resolution" value="2.39 A"/>
    <property type="chains" value="H/V=20-215"/>
</dbReference>
<dbReference type="PDBsum" id="1FNT"/>
<dbReference type="PDBsum" id="1G0U"/>
<dbReference type="PDBsum" id="1G65"/>
<dbReference type="PDBsum" id="1JD2"/>
<dbReference type="PDBsum" id="1RYP"/>
<dbReference type="PDBsum" id="1Z7Q"/>
<dbReference type="PDBsum" id="2F16"/>
<dbReference type="PDBsum" id="2FAK"/>
<dbReference type="PDBsum" id="2GPL"/>
<dbReference type="PDBsum" id="2ZCY"/>
<dbReference type="PDBsum" id="3BDM"/>
<dbReference type="PDBsum" id="3D29"/>
<dbReference type="PDBsum" id="3DY3"/>
<dbReference type="PDBsum" id="3DY4"/>
<dbReference type="PDBsum" id="3E47"/>
<dbReference type="PDBsum" id="3GPJ"/>
<dbReference type="PDBsum" id="3GPT"/>
<dbReference type="PDBsum" id="3GPW"/>
<dbReference type="PDBsum" id="3HYE"/>
<dbReference type="PDBsum" id="3JCO"/>
<dbReference type="PDBsum" id="3JCP"/>
<dbReference type="PDBsum" id="3MG0"/>
<dbReference type="PDBsum" id="3MG4"/>
<dbReference type="PDBsum" id="3MG6"/>
<dbReference type="PDBsum" id="3MG7"/>
<dbReference type="PDBsum" id="3MG8"/>
<dbReference type="PDBsum" id="3NZJ"/>
<dbReference type="PDBsum" id="3NZW"/>
<dbReference type="PDBsum" id="3NZX"/>
<dbReference type="PDBsum" id="3OEU"/>
<dbReference type="PDBsum" id="3OEV"/>
<dbReference type="PDBsum" id="3OKJ"/>
<dbReference type="PDBsum" id="3SDI"/>
<dbReference type="PDBsum" id="3SDK"/>
<dbReference type="PDBsum" id="3SHJ"/>
<dbReference type="PDBsum" id="3TDD"/>
<dbReference type="PDBsum" id="3UN4"/>
<dbReference type="PDBsum" id="3UN8"/>
<dbReference type="PDBsum" id="3WXR"/>
<dbReference type="PDBsum" id="4CR2"/>
<dbReference type="PDBsum" id="4CR3"/>
<dbReference type="PDBsum" id="4CR4"/>
<dbReference type="PDBsum" id="4EU2"/>
<dbReference type="PDBsum" id="4FZC"/>
<dbReference type="PDBsum" id="4FZG"/>
<dbReference type="PDBsum" id="4G4S"/>
<dbReference type="PDBsum" id="4GK7"/>
<dbReference type="PDBsum" id="4HNP"/>
<dbReference type="PDBsum" id="4HRC"/>
<dbReference type="PDBsum" id="4HRD"/>
<dbReference type="PDBsum" id="4INR"/>
<dbReference type="PDBsum" id="4INT"/>
<dbReference type="PDBsum" id="4INU"/>
<dbReference type="PDBsum" id="4J70"/>
<dbReference type="PDBsum" id="4JSQ"/>
<dbReference type="PDBsum" id="4JSU"/>
<dbReference type="PDBsum" id="4JT0"/>
<dbReference type="PDBsum" id="4LQI"/>
<dbReference type="PDBsum" id="4LTC"/>
<dbReference type="PDBsum" id="4NNN"/>
<dbReference type="PDBsum" id="4NNW"/>
<dbReference type="PDBsum" id="4NO1"/>
<dbReference type="PDBsum" id="4NO6"/>
<dbReference type="PDBsum" id="4NO8"/>
<dbReference type="PDBsum" id="4NO9"/>
<dbReference type="PDBsum" id="4Q1S"/>
<dbReference type="PDBsum" id="4QBY"/>
<dbReference type="PDBsum" id="4QLQ"/>
<dbReference type="PDBsum" id="4QLS"/>
<dbReference type="PDBsum" id="4QLT"/>
<dbReference type="PDBsum" id="4QLU"/>
<dbReference type="PDBsum" id="4QLV"/>
<dbReference type="PDBsum" id="4QUX"/>
<dbReference type="PDBsum" id="4QUY"/>
<dbReference type="PDBsum" id="4QV0"/>
<dbReference type="PDBsum" id="4QV1"/>
<dbReference type="PDBsum" id="4QV3"/>
<dbReference type="PDBsum" id="4QV4"/>
<dbReference type="PDBsum" id="4QV5"/>
<dbReference type="PDBsum" id="4QV6"/>
<dbReference type="PDBsum" id="4QV7"/>
<dbReference type="PDBsum" id="4QV8"/>
<dbReference type="PDBsum" id="4QV9"/>
<dbReference type="PDBsum" id="4QVL"/>
<dbReference type="PDBsum" id="4QVM"/>
<dbReference type="PDBsum" id="4QVN"/>
<dbReference type="PDBsum" id="4QVP"/>
<dbReference type="PDBsum" id="4QVQ"/>
<dbReference type="PDBsum" id="4QVV"/>
<dbReference type="PDBsum" id="4QVW"/>
<dbReference type="PDBsum" id="4QVY"/>
<dbReference type="PDBsum" id="4QW0"/>
<dbReference type="PDBsum" id="4QW1"/>
<dbReference type="PDBsum" id="4QW3"/>
<dbReference type="PDBsum" id="4QW4"/>
<dbReference type="PDBsum" id="4QW5"/>
<dbReference type="PDBsum" id="4QW6"/>
<dbReference type="PDBsum" id="4QW7"/>
<dbReference type="PDBsum" id="4QWF"/>
<dbReference type="PDBsum" id="4QWG"/>
<dbReference type="PDBsum" id="4QWI"/>
<dbReference type="PDBsum" id="4QWJ"/>
<dbReference type="PDBsum" id="4QWK"/>
<dbReference type="PDBsum" id="4QWL"/>
<dbReference type="PDBsum" id="4QWR"/>
<dbReference type="PDBsum" id="4QWS"/>
<dbReference type="PDBsum" id="4QWU"/>
<dbReference type="PDBsum" id="4QWX"/>
<dbReference type="PDBsum" id="4QXJ"/>
<dbReference type="PDBsum" id="4QZ0"/>
<dbReference type="PDBsum" id="4QZ1"/>
<dbReference type="PDBsum" id="4QZ2"/>
<dbReference type="PDBsum" id="4QZ3"/>
<dbReference type="PDBsum" id="4QZ4"/>
<dbReference type="PDBsum" id="4QZ5"/>
<dbReference type="PDBsum" id="4QZ6"/>
<dbReference type="PDBsum" id="4QZ7"/>
<dbReference type="PDBsum" id="4QZW"/>
<dbReference type="PDBsum" id="4QZX"/>
<dbReference type="PDBsum" id="4QZZ"/>
<dbReference type="PDBsum" id="4R00"/>
<dbReference type="PDBsum" id="4R02"/>
<dbReference type="PDBsum" id="4R17"/>
<dbReference type="PDBsum" id="4R18"/>
<dbReference type="PDBsum" id="4RUR"/>
<dbReference type="PDBsum" id="4V7O"/>
<dbReference type="PDBsum" id="4X6Z"/>
<dbReference type="PDBsum" id="4Y69"/>
<dbReference type="PDBsum" id="4Y6A"/>
<dbReference type="PDBsum" id="4Y6V"/>
<dbReference type="PDBsum" id="4Y6Z"/>
<dbReference type="PDBsum" id="4Y70"/>
<dbReference type="PDBsum" id="4Y74"/>
<dbReference type="PDBsum" id="4Y75"/>
<dbReference type="PDBsum" id="4Y77"/>
<dbReference type="PDBsum" id="4Y78"/>
<dbReference type="PDBsum" id="4Y7W"/>
<dbReference type="PDBsum" id="4Y7X"/>
<dbReference type="PDBsum" id="4Y7Y"/>
<dbReference type="PDBsum" id="4Y80"/>
<dbReference type="PDBsum" id="4Y81"/>
<dbReference type="PDBsum" id="4Y82"/>
<dbReference type="PDBsum" id="4Y84"/>
<dbReference type="PDBsum" id="4Y8G"/>
<dbReference type="PDBsum" id="4Y8H"/>
<dbReference type="PDBsum" id="4Y8I"/>
<dbReference type="PDBsum" id="4Y8J"/>
<dbReference type="PDBsum" id="4Y8K"/>
<dbReference type="PDBsum" id="4Y8L"/>
<dbReference type="PDBsum" id="4Y8M"/>
<dbReference type="PDBsum" id="4Y8N"/>
<dbReference type="PDBsum" id="4Y8O"/>
<dbReference type="PDBsum" id="4Y8P"/>
<dbReference type="PDBsum" id="4Y8Q"/>
<dbReference type="PDBsum" id="4Y8R"/>
<dbReference type="PDBsum" id="4Y8S"/>
<dbReference type="PDBsum" id="4Y8T"/>
<dbReference type="PDBsum" id="4Y8U"/>
<dbReference type="PDBsum" id="4Y9Y"/>
<dbReference type="PDBsum" id="4Y9Z"/>
<dbReference type="PDBsum" id="4YA0"/>
<dbReference type="PDBsum" id="4YA1"/>
<dbReference type="PDBsum" id="4YA2"/>
<dbReference type="PDBsum" id="4YA3"/>
<dbReference type="PDBsum" id="4YA4"/>
<dbReference type="PDBsum" id="4YA5"/>
<dbReference type="PDBsum" id="4YA7"/>
<dbReference type="PDBsum" id="4YA9"/>
<dbReference type="PDBsum" id="4Z1L"/>
<dbReference type="PDBsum" id="5A5B"/>
<dbReference type="PDBsum" id="5AHJ"/>
<dbReference type="PDBsum" id="5BOU"/>
<dbReference type="PDBsum" id="5BXL"/>
<dbReference type="PDBsum" id="5BXN"/>
<dbReference type="PDBsum" id="5CGF"/>
<dbReference type="PDBsum" id="5CGG"/>
<dbReference type="PDBsum" id="5CGH"/>
<dbReference type="PDBsum" id="5CGI"/>
<dbReference type="PDBsum" id="5CZ4"/>
<dbReference type="PDBsum" id="5CZ5"/>
<dbReference type="PDBsum" id="5CZ6"/>
<dbReference type="PDBsum" id="5CZ7"/>
<dbReference type="PDBsum" id="5CZ8"/>
<dbReference type="PDBsum" id="5CZ9"/>
<dbReference type="PDBsum" id="5CZA"/>
<dbReference type="PDBsum" id="5D0S"/>
<dbReference type="PDBsum" id="5D0T"/>
<dbReference type="PDBsum" id="5D0V"/>
<dbReference type="PDBsum" id="5D0W"/>
<dbReference type="PDBsum" id="5D0X"/>
<dbReference type="PDBsum" id="5D0Z"/>
<dbReference type="PDBsum" id="5DKI"/>
<dbReference type="PDBsum" id="5DKJ"/>
<dbReference type="PDBsum" id="5FG7"/>
<dbReference type="PDBsum" id="5FG9"/>
<dbReference type="PDBsum" id="5FGA"/>
<dbReference type="PDBsum" id="5FGD"/>
<dbReference type="PDBsum" id="5FGE"/>
<dbReference type="PDBsum" id="5FGF"/>
<dbReference type="PDBsum" id="5FGG"/>
<dbReference type="PDBsum" id="5FGH"/>
<dbReference type="PDBsum" id="5FGI"/>
<dbReference type="PDBsum" id="5FHS"/>
<dbReference type="PDBsum" id="5JHR"/>
<dbReference type="PDBsum" id="5JHS"/>
<dbReference type="PDBsum" id="5L52"/>
<dbReference type="PDBsum" id="5L54"/>
<dbReference type="PDBsum" id="5L55"/>
<dbReference type="PDBsum" id="5L5A"/>
<dbReference type="PDBsum" id="5L5B"/>
<dbReference type="PDBsum" id="5L5D"/>
<dbReference type="PDBsum" id="5L5E"/>
<dbReference type="PDBsum" id="5L5F"/>
<dbReference type="PDBsum" id="5L5H"/>
<dbReference type="PDBsum" id="5L5I"/>
<dbReference type="PDBsum" id="5L5J"/>
<dbReference type="PDBsum" id="5L5O"/>
<dbReference type="PDBsum" id="5L5P"/>
<dbReference type="PDBsum" id="5L5Q"/>
<dbReference type="PDBsum" id="5L5R"/>
<dbReference type="PDBsum" id="5L5S"/>
<dbReference type="PDBsum" id="5L5T"/>
<dbReference type="PDBsum" id="5L5U"/>
<dbReference type="PDBsum" id="5L5V"/>
<dbReference type="PDBsum" id="5L5W"/>
<dbReference type="PDBsum" id="5L5X"/>
<dbReference type="PDBsum" id="5L5Y"/>
<dbReference type="PDBsum" id="5L5Z"/>
<dbReference type="PDBsum" id="5L60"/>
<dbReference type="PDBsum" id="5L61"/>
<dbReference type="PDBsum" id="5L62"/>
<dbReference type="PDBsum" id="5L63"/>
<dbReference type="PDBsum" id="5L64"/>
<dbReference type="PDBsum" id="5L65"/>
<dbReference type="PDBsum" id="5L66"/>
<dbReference type="PDBsum" id="5L67"/>
<dbReference type="PDBsum" id="5L68"/>
<dbReference type="PDBsum" id="5L69"/>
<dbReference type="PDBsum" id="5L6A"/>
<dbReference type="PDBsum" id="5L6B"/>
<dbReference type="PDBsum" id="5L6C"/>
<dbReference type="PDBsum" id="5LAI"/>
<dbReference type="PDBsum" id="5LAJ"/>
<dbReference type="PDBsum" id="5LTT"/>
<dbReference type="PDBsum" id="5M2B"/>
<dbReference type="PDBsum" id="5MP9"/>
<dbReference type="PDBsum" id="5MPA"/>
<dbReference type="PDBsum" id="5MPB"/>
<dbReference type="PDBsum" id="5MPC"/>
<dbReference type="PDBsum" id="5NIF"/>
<dbReference type="PDBsum" id="5WVI"/>
<dbReference type="PDBsum" id="5WVK"/>
<dbReference type="PDBsum" id="6EF3"/>
<dbReference type="PDBsum" id="6FVT"/>
<dbReference type="PDBsum" id="6FVU"/>
<dbReference type="PDBsum" id="6FVV"/>
<dbReference type="PDBsum" id="6FVW"/>
<dbReference type="PDBsum" id="6FVX"/>
<dbReference type="PDBsum" id="6FVY"/>
<dbReference type="PDBsum" id="6G7F"/>
<dbReference type="PDBsum" id="6G8M"/>
<dbReference type="PDBsum" id="6G8N"/>
<dbReference type="PDBsum" id="6GOP"/>
<dbReference type="PDBsum" id="6H39"/>
<dbReference type="PDBsum" id="6HTB"/>
<dbReference type="PDBsum" id="6HTC"/>
<dbReference type="PDBsum" id="6HTD"/>
<dbReference type="PDBsum" id="6HTP"/>
<dbReference type="PDBsum" id="6HTR"/>
<dbReference type="PDBsum" id="6HUB"/>
<dbReference type="PDBsum" id="6HUC"/>
<dbReference type="PDBsum" id="6HUQ"/>
<dbReference type="PDBsum" id="6HUU"/>
<dbReference type="PDBsum" id="6HUV"/>
<dbReference type="PDBsum" id="6HV3"/>
<dbReference type="PDBsum" id="6HV4"/>
<dbReference type="PDBsum" id="6HV5"/>
<dbReference type="PDBsum" id="6HV7"/>
<dbReference type="PDBsum" id="6HVA"/>
<dbReference type="PDBsum" id="6HVR"/>
<dbReference type="PDBsum" id="6HVS"/>
<dbReference type="PDBsum" id="6HVT"/>
<dbReference type="PDBsum" id="6HVU"/>
<dbReference type="PDBsum" id="6HVV"/>
<dbReference type="PDBsum" id="6HVW"/>
<dbReference type="PDBsum" id="6HVX"/>
<dbReference type="PDBsum" id="6HVY"/>
<dbReference type="PDBsum" id="6HW0"/>
<dbReference type="PDBsum" id="6HW3"/>
<dbReference type="PDBsum" id="6HW4"/>
<dbReference type="PDBsum" id="6HW5"/>
<dbReference type="PDBsum" id="6HW6"/>
<dbReference type="PDBsum" id="6HW7"/>
<dbReference type="PDBsum" id="6HW8"/>
<dbReference type="PDBsum" id="6HW9"/>
<dbReference type="PDBsum" id="6HWA"/>
<dbReference type="PDBsum" id="6HWB"/>
<dbReference type="PDBsum" id="6HWC"/>
<dbReference type="PDBsum" id="6HWD"/>
<dbReference type="PDBsum" id="6HWE"/>
<dbReference type="PDBsum" id="6HWF"/>
<dbReference type="PDBsum" id="6J2C"/>
<dbReference type="PDBsum" id="6J2N"/>
<dbReference type="PDBsum" id="6J2Q"/>
<dbReference type="PDBsum" id="6J2X"/>
<dbReference type="PDBsum" id="6J30"/>
<dbReference type="PDBsum" id="6ZOU"/>
<dbReference type="PDBsum" id="6ZP6"/>
<dbReference type="PDBsum" id="6ZP8"/>
<dbReference type="PDBsum" id="7LS5"/>
<dbReference type="PDBsum" id="7O2L"/>
<dbReference type="PDBsum" id="7QO3"/>
<dbReference type="PDBsum" id="7QO5"/>
<dbReference type="PDBsum" id="7QO6"/>
<dbReference type="PDBsum" id="7TEJ"/>
<dbReference type="PDBsum" id="7TEO"/>
<dbReference type="PDBsum" id="8BW1"/>
<dbReference type="PDBsum" id="8OHZ"/>
<dbReference type="PDBsum" id="8OI1"/>
<dbReference type="PDBsum" id="8OLR"/>
<dbReference type="PDBsum" id="8RHJ"/>
<dbReference type="PDBsum" id="8RHK"/>
<dbReference type="PDBsum" id="8RHL"/>
<dbReference type="PDBsum" id="8RVL"/>
<dbReference type="PDBsum" id="8RVO"/>
<dbReference type="PDBsum" id="8RVP"/>
<dbReference type="PDBsum" id="8RVQ"/>
<dbReference type="PDBsum" id="8T08"/>
<dbReference type="PDBsum" id="8T0M"/>
<dbReference type="PDBsum" id="8U6Y"/>
<dbReference type="PDBsum" id="8U7U"/>
<dbReference type="PDBsum" id="9EY9"/>
<dbReference type="PDBsum" id="9FST"/>
<dbReference type="PDBsum" id="9FSV"/>
<dbReference type="PDBsum" id="9FT0"/>
<dbReference type="PDBsum" id="9FT1"/>
<dbReference type="PDBsum" id="9GBK"/>
<dbReference type="EMDB" id="EMD-14082"/>
<dbReference type="EMDB" id="EMD-14085"/>
<dbReference type="EMDB" id="EMD-19523"/>
<dbReference type="EMDB" id="EMD-19527"/>
<dbReference type="EMDB" id="EMD-19528"/>
<dbReference type="EMDB" id="EMD-19529"/>
<dbReference type="EMDB" id="EMD-23502"/>
<dbReference type="EMDB" id="EMD-25847"/>
<dbReference type="EMDB" id="EMD-25848"/>
<dbReference type="EMDB" id="EMD-3534"/>
<dbReference type="EMDB" id="EMD-3535"/>
<dbReference type="EMDB" id="EMD-3536"/>
<dbReference type="EMDB" id="EMD-3537"/>
<dbReference type="EMDB" id="EMD-40938"/>
<dbReference type="EMDB" id="EMD-40944"/>
<dbReference type="EMDB" id="EMD-41963"/>
<dbReference type="EMDB" id="EMD-41993"/>
<dbReference type="EMDB" id="EMD-4321"/>
<dbReference type="EMDB" id="EMD-4322"/>
<dbReference type="EMDB" id="EMD-4323"/>
<dbReference type="EMDB" id="EMD-4324"/>
<dbReference type="EMDB" id="EMD-51221"/>
<dbReference type="EMDB" id="EMD-6693"/>
<dbReference type="EMDB" id="EMD-6694"/>
<dbReference type="EMDB" id="EMD-9045"/>
<dbReference type="EMDB" id="EMD-9769"/>
<dbReference type="EMDB" id="EMD-9770"/>
<dbReference type="EMDB" id="EMD-9771"/>
<dbReference type="EMDB" id="EMD-9772"/>
<dbReference type="EMDB" id="EMD-9773"/>
<dbReference type="SMR" id="P38624"/>
<dbReference type="BioGRID" id="33756">
    <property type="interactions" value="146"/>
</dbReference>
<dbReference type="ComplexPortal" id="CPX-2262">
    <property type="entry name" value="26S proteasome complex"/>
</dbReference>
<dbReference type="DIP" id="DIP-1527N"/>
<dbReference type="FunCoup" id="P38624">
    <property type="interactions" value="1214"/>
</dbReference>
<dbReference type="IntAct" id="P38624">
    <property type="interactions" value="49"/>
</dbReference>
<dbReference type="MINT" id="P38624"/>
<dbReference type="STRING" id="4932.YJL001W"/>
<dbReference type="ChEMBL" id="CHEMBL4295578"/>
<dbReference type="MEROPS" id="T01.010"/>
<dbReference type="GlyGen" id="P38624">
    <property type="glycosylation" value="1 site"/>
</dbReference>
<dbReference type="iPTMnet" id="P38624"/>
<dbReference type="PaxDb" id="4932-YJL001W"/>
<dbReference type="PeptideAtlas" id="P38624"/>
<dbReference type="EnsemblFungi" id="YJL001W_mRNA">
    <property type="protein sequence ID" value="YJL001W"/>
    <property type="gene ID" value="YJL001W"/>
</dbReference>
<dbReference type="GeneID" id="853456"/>
<dbReference type="KEGG" id="sce:YJL001W"/>
<dbReference type="AGR" id="SGD:S000003538"/>
<dbReference type="SGD" id="S000003538">
    <property type="gene designation" value="PRE3"/>
</dbReference>
<dbReference type="VEuPathDB" id="FungiDB:YJL001W"/>
<dbReference type="eggNOG" id="KOG0174">
    <property type="taxonomic scope" value="Eukaryota"/>
</dbReference>
<dbReference type="GeneTree" id="ENSGT00940000169029"/>
<dbReference type="HOGENOM" id="CLU_035750_5_2_1"/>
<dbReference type="InParanoid" id="P38624"/>
<dbReference type="OMA" id="TFIYGYC"/>
<dbReference type="OrthoDB" id="7854943at2759"/>
<dbReference type="BioCyc" id="YEAST:G3O-31481-MONOMER"/>
<dbReference type="BRENDA" id="3.4.25.1">
    <property type="organism ID" value="984"/>
</dbReference>
<dbReference type="Reactome" id="R-SCE-1236978">
    <property type="pathway name" value="Cross-presentation of soluble exogenous antigens (endosomes)"/>
</dbReference>
<dbReference type="Reactome" id="R-SCE-5668541">
    <property type="pathway name" value="TNFR2 non-canonical NF-kB pathway"/>
</dbReference>
<dbReference type="Reactome" id="R-SCE-5687128">
    <property type="pathway name" value="MAPK6/MAPK4 signaling"/>
</dbReference>
<dbReference type="Reactome" id="R-SCE-5689880">
    <property type="pathway name" value="Ub-specific processing proteases"/>
</dbReference>
<dbReference type="Reactome" id="R-SCE-68949">
    <property type="pathway name" value="Orc1 removal from chromatin"/>
</dbReference>
<dbReference type="Reactome" id="R-SCE-69017">
    <property type="pathway name" value="CDK-mediated phosphorylation and removal of Cdc6"/>
</dbReference>
<dbReference type="Reactome" id="R-SCE-69601">
    <property type="pathway name" value="Ubiquitin Mediated Degradation of Phosphorylated Cdc25A"/>
</dbReference>
<dbReference type="Reactome" id="R-SCE-8854050">
    <property type="pathway name" value="FBXL7 down-regulates AURKA during mitotic entry and in early mitosis"/>
</dbReference>
<dbReference type="Reactome" id="R-SCE-8948751">
    <property type="pathway name" value="Regulation of PTEN stability and activity"/>
</dbReference>
<dbReference type="Reactome" id="R-SCE-8951664">
    <property type="pathway name" value="Neddylation"/>
</dbReference>
<dbReference type="Reactome" id="R-SCE-9755511">
    <property type="pathway name" value="KEAP1-NFE2L2 pathway"/>
</dbReference>
<dbReference type="Reactome" id="R-SCE-983168">
    <property type="pathway name" value="Antigen processing: Ubiquitination &amp; Proteasome degradation"/>
</dbReference>
<dbReference type="Reactome" id="R-SCE-9907900">
    <property type="pathway name" value="Proteasome assembly"/>
</dbReference>
<dbReference type="BioGRID-ORCS" id="853456">
    <property type="hits" value="1 hit in 10 CRISPR screens"/>
</dbReference>
<dbReference type="EvolutionaryTrace" id="P38624"/>
<dbReference type="PRO" id="PR:P38624"/>
<dbReference type="Proteomes" id="UP000002311">
    <property type="component" value="Chromosome X"/>
</dbReference>
<dbReference type="RNAct" id="P38624">
    <property type="molecule type" value="protein"/>
</dbReference>
<dbReference type="GO" id="GO:0005829">
    <property type="term" value="C:cytosol"/>
    <property type="evidence" value="ECO:0000318"/>
    <property type="project" value="GO_Central"/>
</dbReference>
<dbReference type="GO" id="GO:0005634">
    <property type="term" value="C:nucleus"/>
    <property type="evidence" value="ECO:0000318"/>
    <property type="project" value="GO_Central"/>
</dbReference>
<dbReference type="GO" id="GO:0000502">
    <property type="term" value="C:proteasome complex"/>
    <property type="evidence" value="ECO:0000353"/>
    <property type="project" value="ComplexPortal"/>
</dbReference>
<dbReference type="GO" id="GO:0019774">
    <property type="term" value="C:proteasome core complex, beta-subunit complex"/>
    <property type="evidence" value="ECO:0000314"/>
    <property type="project" value="SGD"/>
</dbReference>
<dbReference type="GO" id="GO:0034515">
    <property type="term" value="C:proteasome storage granule"/>
    <property type="evidence" value="ECO:0000314"/>
    <property type="project" value="SGD"/>
</dbReference>
<dbReference type="GO" id="GO:0004175">
    <property type="term" value="F:endopeptidase activity"/>
    <property type="evidence" value="ECO:0000315"/>
    <property type="project" value="SGD"/>
</dbReference>
<dbReference type="GO" id="GO:0004298">
    <property type="term" value="F:threonine-type endopeptidase activity"/>
    <property type="evidence" value="ECO:0007669"/>
    <property type="project" value="UniProtKB-KW"/>
</dbReference>
<dbReference type="GO" id="GO:0010499">
    <property type="term" value="P:proteasomal ubiquitin-independent protein catabolic process"/>
    <property type="evidence" value="ECO:0000314"/>
    <property type="project" value="SGD"/>
</dbReference>
<dbReference type="GO" id="GO:0043161">
    <property type="term" value="P:proteasome-mediated ubiquitin-dependent protein catabolic process"/>
    <property type="evidence" value="ECO:0000314"/>
    <property type="project" value="SGD"/>
</dbReference>
<dbReference type="CDD" id="cd03762">
    <property type="entry name" value="proteasome_beta_type_6"/>
    <property type="match status" value="1"/>
</dbReference>
<dbReference type="FunFam" id="3.60.20.10:FF:000010">
    <property type="entry name" value="Proteasome subunit beta type-1"/>
    <property type="match status" value="1"/>
</dbReference>
<dbReference type="Gene3D" id="3.60.20.10">
    <property type="entry name" value="Glutamine Phosphoribosylpyrophosphate, subunit 1, domain 1"/>
    <property type="match status" value="1"/>
</dbReference>
<dbReference type="InterPro" id="IPR029055">
    <property type="entry name" value="Ntn_hydrolases_N"/>
</dbReference>
<dbReference type="InterPro" id="IPR000243">
    <property type="entry name" value="Pept_T1A_subB"/>
</dbReference>
<dbReference type="InterPro" id="IPR016050">
    <property type="entry name" value="Proteasome_bsu_CS"/>
</dbReference>
<dbReference type="InterPro" id="IPR001353">
    <property type="entry name" value="Proteasome_sua/b"/>
</dbReference>
<dbReference type="InterPro" id="IPR023333">
    <property type="entry name" value="Proteasome_suB-type"/>
</dbReference>
<dbReference type="PANTHER" id="PTHR32194:SF0">
    <property type="entry name" value="ATP-DEPENDENT PROTEASE SUBUNIT HSLV"/>
    <property type="match status" value="1"/>
</dbReference>
<dbReference type="PANTHER" id="PTHR32194">
    <property type="entry name" value="METALLOPROTEASE TLDD"/>
    <property type="match status" value="1"/>
</dbReference>
<dbReference type="Pfam" id="PF00227">
    <property type="entry name" value="Proteasome"/>
    <property type="match status" value="1"/>
</dbReference>
<dbReference type="PRINTS" id="PR00141">
    <property type="entry name" value="PROTEASOME"/>
</dbReference>
<dbReference type="SUPFAM" id="SSF56235">
    <property type="entry name" value="N-terminal nucleophile aminohydrolases (Ntn hydrolases)"/>
    <property type="match status" value="1"/>
</dbReference>
<dbReference type="PROSITE" id="PS00854">
    <property type="entry name" value="PROTEASOME_BETA_1"/>
    <property type="match status" value="1"/>
</dbReference>
<dbReference type="PROSITE" id="PS51476">
    <property type="entry name" value="PROTEASOME_BETA_2"/>
    <property type="match status" value="1"/>
</dbReference>
<protein>
    <recommendedName>
        <fullName>Proteasome subunit beta type-1</fullName>
        <ecNumber>3.4.25.1</ecNumber>
    </recommendedName>
    <alternativeName>
        <fullName>Macropain subunit PRE3</fullName>
    </alternativeName>
    <alternativeName>
        <fullName>Multicatalytic endopeptidase complex subunit PRE3</fullName>
    </alternativeName>
    <alternativeName>
        <fullName>Proteasome component PRE3</fullName>
    </alternativeName>
    <alternativeName>
        <fullName>Proteinase YSCE subunit PRE3</fullName>
    </alternativeName>
</protein>